<protein>
    <recommendedName>
        <fullName evidence="65">Sodium channel protein type 4 subunit alpha</fullName>
    </recommendedName>
    <alternativeName>
        <fullName evidence="64">SkM1</fullName>
    </alternativeName>
    <alternativeName>
        <fullName>Sodium channel protein skeletal muscle subunit alpha</fullName>
    </alternativeName>
    <alternativeName>
        <fullName>Sodium channel protein type IV subunit alpha</fullName>
    </alternativeName>
    <alternativeName>
        <fullName evidence="66">Voltage-gated sodium channel subunit alpha Nav1.4</fullName>
    </alternativeName>
</protein>
<accession>P35499</accession>
<accession>Q15478</accession>
<accession>Q16447</accession>
<accession>Q7Z6B1</accession>
<evidence type="ECO:0000250" key="1">
    <source>
        <dbReference type="UniProtKB" id="P15390"/>
    </source>
</evidence>
<evidence type="ECO:0000255" key="2"/>
<evidence type="ECO:0000255" key="3">
    <source>
        <dbReference type="PROSITE-ProRule" id="PRU00116"/>
    </source>
</evidence>
<evidence type="ECO:0000256" key="4">
    <source>
        <dbReference type="SAM" id="MobiDB-lite"/>
    </source>
</evidence>
<evidence type="ECO:0000269" key="5">
    <source>
    </source>
</evidence>
<evidence type="ECO:0000269" key="6">
    <source>
    </source>
</evidence>
<evidence type="ECO:0000269" key="7">
    <source>
    </source>
</evidence>
<evidence type="ECO:0000269" key="8">
    <source>
    </source>
</evidence>
<evidence type="ECO:0000269" key="9">
    <source>
    </source>
</evidence>
<evidence type="ECO:0000269" key="10">
    <source>
    </source>
</evidence>
<evidence type="ECO:0000269" key="11">
    <source>
    </source>
</evidence>
<evidence type="ECO:0000269" key="12">
    <source>
    </source>
</evidence>
<evidence type="ECO:0000269" key="13">
    <source>
    </source>
</evidence>
<evidence type="ECO:0000269" key="14">
    <source>
    </source>
</evidence>
<evidence type="ECO:0000269" key="15">
    <source>
    </source>
</evidence>
<evidence type="ECO:0000269" key="16">
    <source>
    </source>
</evidence>
<evidence type="ECO:0000269" key="17">
    <source>
    </source>
</evidence>
<evidence type="ECO:0000269" key="18">
    <source>
    </source>
</evidence>
<evidence type="ECO:0000269" key="19">
    <source>
    </source>
</evidence>
<evidence type="ECO:0000269" key="20">
    <source>
    </source>
</evidence>
<evidence type="ECO:0000269" key="21">
    <source>
    </source>
</evidence>
<evidence type="ECO:0000269" key="22">
    <source>
    </source>
</evidence>
<evidence type="ECO:0000269" key="23">
    <source>
    </source>
</evidence>
<evidence type="ECO:0000269" key="24">
    <source>
    </source>
</evidence>
<evidence type="ECO:0000269" key="25">
    <source>
    </source>
</evidence>
<evidence type="ECO:0000269" key="26">
    <source>
    </source>
</evidence>
<evidence type="ECO:0000269" key="27">
    <source>
    </source>
</evidence>
<evidence type="ECO:0000269" key="28">
    <source>
    </source>
</evidence>
<evidence type="ECO:0000269" key="29">
    <source>
    </source>
</evidence>
<evidence type="ECO:0000269" key="30">
    <source>
    </source>
</evidence>
<evidence type="ECO:0000269" key="31">
    <source>
    </source>
</evidence>
<evidence type="ECO:0000269" key="32">
    <source>
    </source>
</evidence>
<evidence type="ECO:0000269" key="33">
    <source>
    </source>
</evidence>
<evidence type="ECO:0000269" key="34">
    <source>
    </source>
</evidence>
<evidence type="ECO:0000269" key="35">
    <source>
    </source>
</evidence>
<evidence type="ECO:0000269" key="36">
    <source>
    </source>
</evidence>
<evidence type="ECO:0000269" key="37">
    <source>
    </source>
</evidence>
<evidence type="ECO:0000269" key="38">
    <source>
    </source>
</evidence>
<evidence type="ECO:0000269" key="39">
    <source>
    </source>
</evidence>
<evidence type="ECO:0000269" key="40">
    <source>
    </source>
</evidence>
<evidence type="ECO:0000269" key="41">
    <source>
    </source>
</evidence>
<evidence type="ECO:0000269" key="42">
    <source>
    </source>
</evidence>
<evidence type="ECO:0000269" key="43">
    <source>
    </source>
</evidence>
<evidence type="ECO:0000269" key="44">
    <source>
    </source>
</evidence>
<evidence type="ECO:0000269" key="45">
    <source>
    </source>
</evidence>
<evidence type="ECO:0000269" key="46">
    <source>
    </source>
</evidence>
<evidence type="ECO:0000269" key="47">
    <source>
    </source>
</evidence>
<evidence type="ECO:0000269" key="48">
    <source>
    </source>
</evidence>
<evidence type="ECO:0000269" key="49">
    <source>
    </source>
</evidence>
<evidence type="ECO:0000269" key="50">
    <source>
    </source>
</evidence>
<evidence type="ECO:0000269" key="51">
    <source>
    </source>
</evidence>
<evidence type="ECO:0000269" key="52">
    <source>
    </source>
</evidence>
<evidence type="ECO:0000269" key="53">
    <source>
    </source>
</evidence>
<evidence type="ECO:0000269" key="54">
    <source>
    </source>
</evidence>
<evidence type="ECO:0000269" key="55">
    <source>
    </source>
</evidence>
<evidence type="ECO:0000269" key="56">
    <source>
    </source>
</evidence>
<evidence type="ECO:0000269" key="57">
    <source>
    </source>
</evidence>
<evidence type="ECO:0000269" key="58">
    <source>
    </source>
</evidence>
<evidence type="ECO:0000269" key="59">
    <source>
    </source>
</evidence>
<evidence type="ECO:0000269" key="60">
    <source>
    </source>
</evidence>
<evidence type="ECO:0000269" key="61">
    <source>
    </source>
</evidence>
<evidence type="ECO:0000269" key="62">
    <source>
    </source>
</evidence>
<evidence type="ECO:0000269" key="63">
    <source>
    </source>
</evidence>
<evidence type="ECO:0000303" key="64">
    <source>
    </source>
</evidence>
<evidence type="ECO:0000305" key="65"/>
<evidence type="ECO:0000305" key="66">
    <source>
    </source>
</evidence>
<evidence type="ECO:0000305" key="67">
    <source>
    </source>
</evidence>
<evidence type="ECO:0000312" key="68">
    <source>
        <dbReference type="HGNC" id="HGNC:10591"/>
    </source>
</evidence>
<evidence type="ECO:0007744" key="69">
    <source>
        <dbReference type="PDB" id="6AGF"/>
    </source>
</evidence>
<evidence type="ECO:0007829" key="70">
    <source>
        <dbReference type="PDB" id="6AGF"/>
    </source>
</evidence>
<evidence type="ECO:0007829" key="71">
    <source>
        <dbReference type="PDB" id="6MBA"/>
    </source>
</evidence>
<gene>
    <name evidence="68" type="primary">SCN4A</name>
</gene>
<name>SCN4A_HUMAN</name>
<sequence length="1836" mass="208061">MARPSLCTLVPLGPECLRPFTRESLAAIEQRAVEEEARLQRNKQMEIEEPERKPRSDLEAGKNLPMIYGDPPPEVIGIPLEDLDPYYSNKKTFIVLNKGKAIFRFSATPALYLLSPFSVVRRGAIKVLIHALFSMFIMITILTNCVFMTMSDPPPWSKNVEYTFTGIYTFESLIKILARGFCVDDFTFLRDPWNWLDFSVIMMAYLTEFVDLGNISALRTFRVLRALKTITVIPGLKTIVGALIQSVKKLSDVMILTVFCLSVFALVGLQLFMGNLRQKCVRWPPPFNDTNTTWYSNDTWYGNDTWYGNEMWYGNDSWYANDTWNSHASWATNDTFDWDAYISDEGNFYFLEGSNDALLCGNSSDAGHCPEGYECIKTGRNPNYGYTSYDTFSWAFLALFRLMTQDYWENLFQLTLRAAGKTYMIFFVVIIFLGSFYLINLILAVVAMAYAEQNEATLAEDKEKEEEFQQMLEKFKKHQEELEKAKAAQALEGGEADGDPAHGKDCNGSLDTSQGEKGAPRQSSSGDSGISDAMEELEEAHQKCPPWWYKCAHKVLIWNCCAPWLKFKNIIHLIVMDPFVDLGITICIVLNTLFMAMEHYPMTEHFDNVLTVGNLVFTGIFTAEMVLKLIAMDPYEYFQQGWNIFDSIIVTLSLVELGLANVQGLSVLRSFRLLRVFKLAKSWPTLNMLIKIIGNSVGALGNLTLVLAIIVFIFAVVGMQLFGKSYKECVCKIALDCNLPRWHMHDFFHSFLIVFRILCGEWIETMWDCMEVAGQAMCLTVFLMVMVIGNLVVLNLFLALLLSSFSADSLAASDEDGEMNNLQIAIGRIKLGIGFAKAFLLGLLHGKILSPKDIMLSLGEADGAGEAGEAGETAPEDEKKEPPEEDLKKDNHILNHMGLADGPPSSLELDHLNFINNPYLTIQVPIASEESDLEMPTEEETDTFSEPEDSKKPPQPLYDGNSSVCSTADYKPPEEDPEEQAEENPEGEQPEECFTEACVQRWPCLYVDISQGRGKKWWTLRRACFKIVEHNWFETFIVFMILLSSGALAFEDIYIEQRRVIRTILEYADKVFTYIFIMEMLLKWVAYGFKVYFTNAWCWLDFLIVDVSIISLVANWLGYSELGPIKSLRTLRALRPLRALSRFEGMRVVVNALLGAIPSIMNVLLVCLIFWLIFSIMGVNLFAGKFYYCINTTTSERFDISEVNNKSECESLMHTGQVRWLNVKVNYDNVGLGYLSLLQVATFKGWMDIMYAAVDSREKEEQPQYEVNLYMYLYFVIFIIFGSFFTLNLFIGVIIDNFNQQKKKLGGKDIFMTEEQKKYYNAMKKLGSKKPQKPIPRPQNKIQGMVYDLVTKQAFDITIMILICLNMVTMMVETDNQSQLKVDILYNINMIFIIIFTGECVLKMLALRQYYFTVGWNIFDFVVVILSIVGLALSDLIQKYFVSPTLFRVIRLARIGRVLRLIRGAKGIRTLLFALMMSLPALFNIGLLLFLVMFIYSIFGMSNFAYVKKESGIDDMFNFETFGNSIICLFEITTSAGWDGLLNPILNSGPPDCDPNLENPGTSVKGDCGNPSIGICFFCSYIIISFLIVVNMYIAIILENFNVATEESSEPLGEDDFEMFYETWEKFDPDATQFIAYSRLSDFVDTLQEPLRIAKPNKIKLITLDLPMVPGDKIHCLDILFALTKEVLGDSGEMDALKQTMEEKFMAANPSKVSYEPITTTLKRKHEEVCAIKIQRAYRRHLLQRSMKQASYMYRHSHDGSGDDAPEKEGLLANTMSKMYGHENGNSSSPSPEEKGEAGDAGPTMGLMPISPSDTAWPPAPPPGQTVRPGVKESLV</sequence>
<dbReference type="EMBL" id="M81758">
    <property type="protein sequence ID" value="AAA60554.1"/>
    <property type="molecule type" value="mRNA"/>
</dbReference>
<dbReference type="EMBL" id="L04236">
    <property type="protein sequence ID" value="AAB59624.1"/>
    <property type="molecule type" value="Genomic_DNA"/>
</dbReference>
<dbReference type="EMBL" id="L04216">
    <property type="protein sequence ID" value="AAB59624.1"/>
    <property type="status" value="JOINED"/>
    <property type="molecule type" value="Genomic_DNA"/>
</dbReference>
<dbReference type="EMBL" id="L04217">
    <property type="protein sequence ID" value="AAB59624.1"/>
    <property type="status" value="JOINED"/>
    <property type="molecule type" value="Genomic_DNA"/>
</dbReference>
<dbReference type="EMBL" id="L04218">
    <property type="protein sequence ID" value="AAB59624.1"/>
    <property type="status" value="JOINED"/>
    <property type="molecule type" value="Genomic_DNA"/>
</dbReference>
<dbReference type="EMBL" id="L04219">
    <property type="protein sequence ID" value="AAB59624.1"/>
    <property type="status" value="JOINED"/>
    <property type="molecule type" value="Genomic_DNA"/>
</dbReference>
<dbReference type="EMBL" id="L04220">
    <property type="protein sequence ID" value="AAB59624.1"/>
    <property type="status" value="JOINED"/>
    <property type="molecule type" value="Genomic_DNA"/>
</dbReference>
<dbReference type="EMBL" id="L04221">
    <property type="protein sequence ID" value="AAB59624.1"/>
    <property type="status" value="JOINED"/>
    <property type="molecule type" value="Genomic_DNA"/>
</dbReference>
<dbReference type="EMBL" id="L04222">
    <property type="protein sequence ID" value="AAB59624.1"/>
    <property type="status" value="JOINED"/>
    <property type="molecule type" value="Genomic_DNA"/>
</dbReference>
<dbReference type="EMBL" id="L04223">
    <property type="protein sequence ID" value="AAB59624.1"/>
    <property type="status" value="JOINED"/>
    <property type="molecule type" value="Genomic_DNA"/>
</dbReference>
<dbReference type="EMBL" id="L04224">
    <property type="protein sequence ID" value="AAB59624.1"/>
    <property type="status" value="JOINED"/>
    <property type="molecule type" value="Genomic_DNA"/>
</dbReference>
<dbReference type="EMBL" id="L04225">
    <property type="protein sequence ID" value="AAB59624.1"/>
    <property type="status" value="JOINED"/>
    <property type="molecule type" value="Genomic_DNA"/>
</dbReference>
<dbReference type="EMBL" id="L04226">
    <property type="protein sequence ID" value="AAB59624.1"/>
    <property type="status" value="JOINED"/>
    <property type="molecule type" value="Genomic_DNA"/>
</dbReference>
<dbReference type="EMBL" id="L04227">
    <property type="protein sequence ID" value="AAB59624.1"/>
    <property type="status" value="JOINED"/>
    <property type="molecule type" value="Genomic_DNA"/>
</dbReference>
<dbReference type="EMBL" id="L04228">
    <property type="protein sequence ID" value="AAB59624.1"/>
    <property type="status" value="JOINED"/>
    <property type="molecule type" value="Genomic_DNA"/>
</dbReference>
<dbReference type="EMBL" id="L04229">
    <property type="protein sequence ID" value="AAB59624.1"/>
    <property type="status" value="JOINED"/>
    <property type="molecule type" value="Genomic_DNA"/>
</dbReference>
<dbReference type="EMBL" id="L04230">
    <property type="protein sequence ID" value="AAB59624.1"/>
    <property type="status" value="JOINED"/>
    <property type="molecule type" value="Genomic_DNA"/>
</dbReference>
<dbReference type="EMBL" id="L04231">
    <property type="protein sequence ID" value="AAB59624.1"/>
    <property type="status" value="JOINED"/>
    <property type="molecule type" value="Genomic_DNA"/>
</dbReference>
<dbReference type="EMBL" id="L04232">
    <property type="protein sequence ID" value="AAB59624.1"/>
    <property type="status" value="JOINED"/>
    <property type="molecule type" value="Genomic_DNA"/>
</dbReference>
<dbReference type="EMBL" id="L04233">
    <property type="protein sequence ID" value="AAB59624.1"/>
    <property type="status" value="JOINED"/>
    <property type="molecule type" value="Genomic_DNA"/>
</dbReference>
<dbReference type="EMBL" id="L04234">
    <property type="protein sequence ID" value="AAB59624.1"/>
    <property type="status" value="JOINED"/>
    <property type="molecule type" value="Genomic_DNA"/>
</dbReference>
<dbReference type="EMBL" id="L04235">
    <property type="protein sequence ID" value="AAB59624.1"/>
    <property type="status" value="JOINED"/>
    <property type="molecule type" value="Genomic_DNA"/>
</dbReference>
<dbReference type="EMBL" id="AY212253">
    <property type="protein sequence ID" value="AAO83647.1"/>
    <property type="molecule type" value="mRNA"/>
</dbReference>
<dbReference type="EMBL" id="L01983">
    <property type="protein sequence ID" value="AAA75557.1"/>
    <property type="status" value="ALT_SEQ"/>
    <property type="molecule type" value="Genomic_DNA"/>
</dbReference>
<dbReference type="EMBL" id="L01962">
    <property type="protein sequence ID" value="AAA75557.1"/>
    <property type="status" value="JOINED"/>
    <property type="molecule type" value="Genomic_DNA"/>
</dbReference>
<dbReference type="EMBL" id="L01963">
    <property type="protein sequence ID" value="AAA75557.1"/>
    <property type="status" value="JOINED"/>
    <property type="molecule type" value="Genomic_DNA"/>
</dbReference>
<dbReference type="EMBL" id="L01964">
    <property type="protein sequence ID" value="AAA75557.1"/>
    <property type="status" value="JOINED"/>
    <property type="molecule type" value="Genomic_DNA"/>
</dbReference>
<dbReference type="EMBL" id="L01965">
    <property type="protein sequence ID" value="AAA75557.1"/>
    <property type="status" value="JOINED"/>
    <property type="molecule type" value="Genomic_DNA"/>
</dbReference>
<dbReference type="EMBL" id="L01966">
    <property type="protein sequence ID" value="AAA75557.1"/>
    <property type="status" value="JOINED"/>
    <property type="molecule type" value="Genomic_DNA"/>
</dbReference>
<dbReference type="EMBL" id="L01967">
    <property type="protein sequence ID" value="AAA75557.1"/>
    <property type="status" value="JOINED"/>
    <property type="molecule type" value="Genomic_DNA"/>
</dbReference>
<dbReference type="EMBL" id="L01968">
    <property type="protein sequence ID" value="AAA75557.1"/>
    <property type="status" value="JOINED"/>
    <property type="molecule type" value="Genomic_DNA"/>
</dbReference>
<dbReference type="EMBL" id="L01969">
    <property type="protein sequence ID" value="AAA75557.1"/>
    <property type="status" value="JOINED"/>
    <property type="molecule type" value="Genomic_DNA"/>
</dbReference>
<dbReference type="EMBL" id="L01970">
    <property type="protein sequence ID" value="AAA75557.1"/>
    <property type="status" value="JOINED"/>
    <property type="molecule type" value="Genomic_DNA"/>
</dbReference>
<dbReference type="EMBL" id="L01971">
    <property type="protein sequence ID" value="AAA75557.1"/>
    <property type="status" value="JOINED"/>
    <property type="molecule type" value="Genomic_DNA"/>
</dbReference>
<dbReference type="EMBL" id="L01972">
    <property type="protein sequence ID" value="AAA75557.1"/>
    <property type="status" value="JOINED"/>
    <property type="molecule type" value="Genomic_DNA"/>
</dbReference>
<dbReference type="EMBL" id="L01973">
    <property type="protein sequence ID" value="AAA75557.1"/>
    <property type="status" value="JOINED"/>
    <property type="molecule type" value="Genomic_DNA"/>
</dbReference>
<dbReference type="EMBL" id="L01974">
    <property type="protein sequence ID" value="AAA75557.1"/>
    <property type="status" value="JOINED"/>
    <property type="molecule type" value="Genomic_DNA"/>
</dbReference>
<dbReference type="EMBL" id="L01975">
    <property type="protein sequence ID" value="AAA75557.1"/>
    <property type="status" value="JOINED"/>
    <property type="molecule type" value="Genomic_DNA"/>
</dbReference>
<dbReference type="EMBL" id="L01976">
    <property type="protein sequence ID" value="AAA75557.1"/>
    <property type="status" value="JOINED"/>
    <property type="molecule type" value="Genomic_DNA"/>
</dbReference>
<dbReference type="EMBL" id="L01977">
    <property type="protein sequence ID" value="AAA75557.1"/>
    <property type="status" value="JOINED"/>
    <property type="molecule type" value="Genomic_DNA"/>
</dbReference>
<dbReference type="EMBL" id="L01978">
    <property type="protein sequence ID" value="AAA75557.1"/>
    <property type="status" value="JOINED"/>
    <property type="molecule type" value="Genomic_DNA"/>
</dbReference>
<dbReference type="EMBL" id="L01979">
    <property type="protein sequence ID" value="AAA75557.1"/>
    <property type="status" value="JOINED"/>
    <property type="molecule type" value="Genomic_DNA"/>
</dbReference>
<dbReference type="EMBL" id="L01980">
    <property type="protein sequence ID" value="AAA75557.1"/>
    <property type="status" value="JOINED"/>
    <property type="molecule type" value="Genomic_DNA"/>
</dbReference>
<dbReference type="EMBL" id="L01981">
    <property type="protein sequence ID" value="AAA75557.1"/>
    <property type="status" value="JOINED"/>
    <property type="molecule type" value="Genomic_DNA"/>
</dbReference>
<dbReference type="EMBL" id="L01982">
    <property type="protein sequence ID" value="AAA75557.1"/>
    <property type="status" value="JOINED"/>
    <property type="molecule type" value="Genomic_DNA"/>
</dbReference>
<dbReference type="EMBL" id="AC127029">
    <property type="status" value="NOT_ANNOTATED_CDS"/>
    <property type="molecule type" value="Genomic_DNA"/>
</dbReference>
<dbReference type="EMBL" id="S82622">
    <property type="protein sequence ID" value="AAB21450.2"/>
    <property type="molecule type" value="Genomic_DNA"/>
</dbReference>
<dbReference type="CCDS" id="CCDS45761.1"/>
<dbReference type="PIR" id="I51964">
    <property type="entry name" value="I51964"/>
</dbReference>
<dbReference type="PIR" id="I54323">
    <property type="entry name" value="I54323"/>
</dbReference>
<dbReference type="PIR" id="I64893">
    <property type="entry name" value="I64893"/>
</dbReference>
<dbReference type="PIR" id="JS0648">
    <property type="entry name" value="JS0648"/>
</dbReference>
<dbReference type="RefSeq" id="NP_000325.4">
    <property type="nucleotide sequence ID" value="NM_000334.4"/>
</dbReference>
<dbReference type="PDB" id="6AGF">
    <property type="method" value="EM"/>
    <property type="resolution" value="3.20 A"/>
    <property type="chains" value="A=1-1836"/>
</dbReference>
<dbReference type="PDB" id="6MBA">
    <property type="method" value="X-ray"/>
    <property type="resolution" value="1.80 A"/>
    <property type="chains" value="A=1599-1764"/>
</dbReference>
<dbReference type="PDB" id="6MC9">
    <property type="method" value="X-ray"/>
    <property type="resolution" value="3.30 A"/>
    <property type="chains" value="A=1599-1754"/>
</dbReference>
<dbReference type="PDBsum" id="6AGF"/>
<dbReference type="PDBsum" id="6MBA"/>
<dbReference type="PDBsum" id="6MC9"/>
<dbReference type="EMDB" id="EMD-9617"/>
<dbReference type="SMR" id="P35499"/>
<dbReference type="BioGRID" id="112234">
    <property type="interactions" value="91"/>
</dbReference>
<dbReference type="ComplexPortal" id="CPX-8665">
    <property type="entry name" value="Nav1.4 voltage-gated sodium channel complex, SCN1B-SCN2B variant"/>
</dbReference>
<dbReference type="ComplexPortal" id="CPX-8666">
    <property type="entry name" value="Nav1.4 voltage-gated sodium channel complex, SCN1B-SCN4B variant"/>
</dbReference>
<dbReference type="ComplexPortal" id="CPX-8667">
    <property type="entry name" value="Nav1.4 voltage-gated sodium channel complex, SCN2B-SCN3B variant"/>
</dbReference>
<dbReference type="ComplexPortal" id="CPX-8668">
    <property type="entry name" value="Nav1.4 voltage-gated sodium channel complex, SCN3B-SCN4B variant"/>
</dbReference>
<dbReference type="CORUM" id="P35499"/>
<dbReference type="FunCoup" id="P35499">
    <property type="interactions" value="376"/>
</dbReference>
<dbReference type="IntAct" id="P35499">
    <property type="interactions" value="87"/>
</dbReference>
<dbReference type="STRING" id="9606.ENSP00000396320"/>
<dbReference type="BindingDB" id="P35499"/>
<dbReference type="ChEMBL" id="CHEMBL2072"/>
<dbReference type="DrugBank" id="DB09088">
    <property type="generic name" value="Amylocaine"/>
</dbReference>
<dbReference type="DrugBank" id="DB09009">
    <property type="generic name" value="Articaine"/>
</dbReference>
<dbReference type="DrugBank" id="DB13746">
    <property type="generic name" value="Bioallethrin"/>
</dbReference>
<dbReference type="DrugBank" id="DB05541">
    <property type="generic name" value="Brivaracetam"/>
</dbReference>
<dbReference type="DrugBank" id="DB00564">
    <property type="generic name" value="Carbamazepine"/>
</dbReference>
<dbReference type="DrugBank" id="DB06119">
    <property type="generic name" value="Cenobamate"/>
</dbReference>
<dbReference type="DrugBank" id="DB01161">
    <property type="generic name" value="Chloroprocaine"/>
</dbReference>
<dbReference type="DrugBank" id="DB00907">
    <property type="generic name" value="Cocaine"/>
</dbReference>
<dbReference type="DrugBank" id="DB13269">
    <property type="generic name" value="Dichlorobenzyl alcohol"/>
</dbReference>
<dbReference type="DrugBank" id="DB00586">
    <property type="generic name" value="Diclofenac"/>
</dbReference>
<dbReference type="DrugBank" id="DB13961">
    <property type="generic name" value="Fish oil"/>
</dbReference>
<dbReference type="DrugBank" id="DB01195">
    <property type="generic name" value="Flecainide"/>
</dbReference>
<dbReference type="DrugBank" id="DB00555">
    <property type="generic name" value="Lamotrigine"/>
</dbReference>
<dbReference type="DrugBank" id="DB00281">
    <property type="generic name" value="Lidocaine"/>
</dbReference>
<dbReference type="DrugBank" id="DB00776">
    <property type="generic name" value="Oxcarbazepine"/>
</dbReference>
<dbReference type="DrugBank" id="DB13154">
    <property type="generic name" value="Parachlorophenol"/>
</dbReference>
<dbReference type="DrugBank" id="DB11186">
    <property type="generic name" value="Pentoxyverine"/>
</dbReference>
<dbReference type="DrugBank" id="DB09345">
    <property type="generic name" value="Pramocaine"/>
</dbReference>
<dbReference type="DrugBank" id="DB01069">
    <property type="generic name" value="Promethazine"/>
</dbReference>
<dbReference type="DrugBank" id="DB00818">
    <property type="generic name" value="Propofol"/>
</dbReference>
<dbReference type="DrugBank" id="DB09342">
    <property type="generic name" value="Propoxycaine"/>
</dbReference>
<dbReference type="DrugBank" id="DB00243">
    <property type="generic name" value="Ranolazine"/>
</dbReference>
<dbReference type="DrugBank" id="DB09085">
    <property type="generic name" value="Tetracaine"/>
</dbReference>
<dbReference type="DrugBank" id="DB00273">
    <property type="generic name" value="Topiramate"/>
</dbReference>
<dbReference type="DrugBank" id="DB00313">
    <property type="generic name" value="Valproic acid"/>
</dbReference>
<dbReference type="DrugBank" id="DB00909">
    <property type="generic name" value="Zonisamide"/>
</dbReference>
<dbReference type="DrugCentral" id="P35499"/>
<dbReference type="GuidetoPHARMACOLOGY" id="581"/>
<dbReference type="TCDB" id="1.A.1.10.4">
    <property type="family name" value="the voltage-gated ion channel (vic) superfamily"/>
</dbReference>
<dbReference type="GlyConnect" id="1752">
    <property type="glycosylation" value="2 N-Linked glycans (2 sites)"/>
</dbReference>
<dbReference type="GlyCosmos" id="P35499">
    <property type="glycosylation" value="12 sites, 3 glycans"/>
</dbReference>
<dbReference type="GlyGen" id="P35499">
    <property type="glycosylation" value="16 sites, 8 N-linked glycans (3 sites)"/>
</dbReference>
<dbReference type="iPTMnet" id="P35499"/>
<dbReference type="PhosphoSitePlus" id="P35499"/>
<dbReference type="BioMuta" id="SCN4A"/>
<dbReference type="DMDM" id="292495096"/>
<dbReference type="MassIVE" id="P35499"/>
<dbReference type="PaxDb" id="9606-ENSP00000396320"/>
<dbReference type="PeptideAtlas" id="P35499"/>
<dbReference type="ProteomicsDB" id="55071"/>
<dbReference type="ABCD" id="P35499">
    <property type="antibodies" value="3 sequenced antibodies"/>
</dbReference>
<dbReference type="Antibodypedia" id="57204">
    <property type="antibodies" value="87 antibodies from 21 providers"/>
</dbReference>
<dbReference type="DNASU" id="6329"/>
<dbReference type="Ensembl" id="ENST00000435607.3">
    <property type="protein sequence ID" value="ENSP00000396320.1"/>
    <property type="gene ID" value="ENSG00000007314.12"/>
</dbReference>
<dbReference type="GeneID" id="6329"/>
<dbReference type="KEGG" id="hsa:6329"/>
<dbReference type="MANE-Select" id="ENST00000435607.3">
    <property type="protein sequence ID" value="ENSP00000396320.1"/>
    <property type="RefSeq nucleotide sequence ID" value="NM_000334.4"/>
    <property type="RefSeq protein sequence ID" value="NP_000325.4"/>
</dbReference>
<dbReference type="UCSC" id="uc002jds.1">
    <property type="organism name" value="human"/>
</dbReference>
<dbReference type="AGR" id="HGNC:10591"/>
<dbReference type="CTD" id="6329"/>
<dbReference type="DisGeNET" id="6329"/>
<dbReference type="GeneCards" id="SCN4A"/>
<dbReference type="GeneReviews" id="SCN4A"/>
<dbReference type="HGNC" id="HGNC:10591">
    <property type="gene designation" value="SCN4A"/>
</dbReference>
<dbReference type="HPA" id="ENSG00000007314">
    <property type="expression patterns" value="Group enriched (skeletal muscle, tongue)"/>
</dbReference>
<dbReference type="MalaCards" id="SCN4A"/>
<dbReference type="MIM" id="168300">
    <property type="type" value="phenotype"/>
</dbReference>
<dbReference type="MIM" id="170500">
    <property type="type" value="phenotype"/>
</dbReference>
<dbReference type="MIM" id="603967">
    <property type="type" value="gene"/>
</dbReference>
<dbReference type="MIM" id="608390">
    <property type="type" value="phenotype"/>
</dbReference>
<dbReference type="MIM" id="613345">
    <property type="type" value="phenotype"/>
</dbReference>
<dbReference type="MIM" id="614198">
    <property type="type" value="phenotype"/>
</dbReference>
<dbReference type="MIM" id="620351">
    <property type="type" value="phenotype"/>
</dbReference>
<dbReference type="MIM" id="620369">
    <property type="type" value="phenotype"/>
</dbReference>
<dbReference type="neXtProt" id="NX_P35499"/>
<dbReference type="OpenTargets" id="ENSG00000007314"/>
<dbReference type="Orphanet" id="99736">
    <property type="disease" value="Acetazolamide-responsive myotonia"/>
</dbReference>
<dbReference type="Orphanet" id="682">
    <property type="disease" value="Hyperkalemic periodic paralysis"/>
</dbReference>
<dbReference type="Orphanet" id="681">
    <property type="disease" value="Hypokalemic periodic paralysis"/>
</dbReference>
<dbReference type="Orphanet" id="99734">
    <property type="disease" value="Myotonia fluctuans"/>
</dbReference>
<dbReference type="Orphanet" id="99735">
    <property type="disease" value="Myotonia permanens"/>
</dbReference>
<dbReference type="Orphanet" id="684">
    <property type="disease" value="Paramyotonia congenita of Von Eulenburg"/>
</dbReference>
<dbReference type="Orphanet" id="98913">
    <property type="disease" value="Postsynaptic congenital myasthenic syndromes"/>
</dbReference>
<dbReference type="PharmGKB" id="PA35006"/>
<dbReference type="VEuPathDB" id="HostDB:ENSG00000007314"/>
<dbReference type="eggNOG" id="KOG2301">
    <property type="taxonomic scope" value="Eukaryota"/>
</dbReference>
<dbReference type="GeneTree" id="ENSGT00940000159417"/>
<dbReference type="HOGENOM" id="CLU_000540_5_0_1"/>
<dbReference type="InParanoid" id="P35499"/>
<dbReference type="OMA" id="MSKMYGP"/>
<dbReference type="OrthoDB" id="2984333at2759"/>
<dbReference type="PAN-GO" id="P35499">
    <property type="GO annotations" value="6 GO annotations based on evolutionary models"/>
</dbReference>
<dbReference type="PhylomeDB" id="P35499"/>
<dbReference type="TreeFam" id="TF323985"/>
<dbReference type="PathwayCommons" id="P35499"/>
<dbReference type="Reactome" id="R-HSA-445095">
    <property type="pathway name" value="Interaction between L1 and Ankyrins"/>
</dbReference>
<dbReference type="Reactome" id="R-HSA-5576892">
    <property type="pathway name" value="Phase 0 - rapid depolarisation"/>
</dbReference>
<dbReference type="SignaLink" id="P35499"/>
<dbReference type="SIGNOR" id="P35499"/>
<dbReference type="BioGRID-ORCS" id="6329">
    <property type="hits" value="16 hits in 1152 CRISPR screens"/>
</dbReference>
<dbReference type="ChiTaRS" id="SCN4A">
    <property type="organism name" value="human"/>
</dbReference>
<dbReference type="GeneWiki" id="Nav1.4"/>
<dbReference type="GenomeRNAi" id="6329"/>
<dbReference type="Pharos" id="P35499">
    <property type="development level" value="Tclin"/>
</dbReference>
<dbReference type="PRO" id="PR:P35499"/>
<dbReference type="Proteomes" id="UP000005640">
    <property type="component" value="Chromosome 17"/>
</dbReference>
<dbReference type="RNAct" id="P35499">
    <property type="molecule type" value="protein"/>
</dbReference>
<dbReference type="Bgee" id="ENSG00000007314">
    <property type="expression patterns" value="Expressed in hindlimb stylopod muscle and 108 other cell types or tissues"/>
</dbReference>
<dbReference type="GO" id="GO:0005886">
    <property type="term" value="C:plasma membrane"/>
    <property type="evidence" value="ECO:0000314"/>
    <property type="project" value="UniProtKB"/>
</dbReference>
<dbReference type="GO" id="GO:0001518">
    <property type="term" value="C:voltage-gated sodium channel complex"/>
    <property type="evidence" value="ECO:0000314"/>
    <property type="project" value="UniProtKB"/>
</dbReference>
<dbReference type="GO" id="GO:0005248">
    <property type="term" value="F:voltage-gated sodium channel activity"/>
    <property type="evidence" value="ECO:0000314"/>
    <property type="project" value="UniProtKB"/>
</dbReference>
<dbReference type="GO" id="GO:0086002">
    <property type="term" value="P:cardiac muscle cell action potential involved in contraction"/>
    <property type="evidence" value="ECO:0000318"/>
    <property type="project" value="GO_Central"/>
</dbReference>
<dbReference type="GO" id="GO:0006936">
    <property type="term" value="P:muscle contraction"/>
    <property type="evidence" value="ECO:0000304"/>
    <property type="project" value="ProtInc"/>
</dbReference>
<dbReference type="GO" id="GO:0100001">
    <property type="term" value="P:regulation of skeletal muscle contraction by action potential"/>
    <property type="evidence" value="ECO:0000315"/>
    <property type="project" value="UniProtKB"/>
</dbReference>
<dbReference type="GO" id="GO:0035725">
    <property type="term" value="P:sodium ion transmembrane transport"/>
    <property type="evidence" value="ECO:0000314"/>
    <property type="project" value="UniProtKB"/>
</dbReference>
<dbReference type="GO" id="GO:0006814">
    <property type="term" value="P:sodium ion transport"/>
    <property type="evidence" value="ECO:0000304"/>
    <property type="project" value="ProtInc"/>
</dbReference>
<dbReference type="CDD" id="cd13433">
    <property type="entry name" value="Na_channel_gate"/>
    <property type="match status" value="1"/>
</dbReference>
<dbReference type="FunFam" id="1.10.238.10:FF:000002">
    <property type="entry name" value="Sodium channel protein"/>
    <property type="match status" value="1"/>
</dbReference>
<dbReference type="FunFam" id="1.10.287.70:FF:000001">
    <property type="entry name" value="Sodium channel protein"/>
    <property type="match status" value="1"/>
</dbReference>
<dbReference type="FunFam" id="1.10.287.70:FF:000006">
    <property type="entry name" value="Sodium channel protein"/>
    <property type="match status" value="1"/>
</dbReference>
<dbReference type="FunFam" id="1.20.120.350:FF:000002">
    <property type="entry name" value="Sodium channel protein"/>
    <property type="match status" value="1"/>
</dbReference>
<dbReference type="FunFam" id="1.20.120.350:FF:000004">
    <property type="entry name" value="Sodium channel protein"/>
    <property type="match status" value="1"/>
</dbReference>
<dbReference type="FunFam" id="1.20.120.350:FF:000005">
    <property type="entry name" value="Sodium channel protein"/>
    <property type="match status" value="1"/>
</dbReference>
<dbReference type="FunFam" id="1.20.5.1190:FF:000001">
    <property type="entry name" value="Sodium channel protein"/>
    <property type="match status" value="1"/>
</dbReference>
<dbReference type="FunFam" id="1.20.120.350:FF:000003">
    <property type="entry name" value="Voltage-dependent sodium channel"/>
    <property type="match status" value="1"/>
</dbReference>
<dbReference type="Gene3D" id="1.10.287.70">
    <property type="match status" value="4"/>
</dbReference>
<dbReference type="Gene3D" id="1.10.238.10">
    <property type="entry name" value="EF-hand"/>
    <property type="match status" value="1"/>
</dbReference>
<dbReference type="Gene3D" id="1.20.5.1190">
    <property type="entry name" value="iswi atpase"/>
    <property type="match status" value="1"/>
</dbReference>
<dbReference type="Gene3D" id="1.20.120.350">
    <property type="entry name" value="Voltage-gated potassium channels. Chain C"/>
    <property type="match status" value="4"/>
</dbReference>
<dbReference type="InterPro" id="IPR005821">
    <property type="entry name" value="Ion_trans_dom"/>
</dbReference>
<dbReference type="InterPro" id="IPR008052">
    <property type="entry name" value="Na_channel_a4su_mammal"/>
</dbReference>
<dbReference type="InterPro" id="IPR001696">
    <property type="entry name" value="Na_channel_asu"/>
</dbReference>
<dbReference type="InterPro" id="IPR044564">
    <property type="entry name" value="Na_chnl_inactivation_gate"/>
</dbReference>
<dbReference type="InterPro" id="IPR010526">
    <property type="entry name" value="Na_trans_assoc_dom"/>
</dbReference>
<dbReference type="InterPro" id="IPR043203">
    <property type="entry name" value="VGCC_Ca_Na"/>
</dbReference>
<dbReference type="InterPro" id="IPR027359">
    <property type="entry name" value="Volt_channel_dom_sf"/>
</dbReference>
<dbReference type="PANTHER" id="PTHR10037:SF223">
    <property type="entry name" value="SODIUM CHANNEL PROTEIN TYPE 4 SUBUNIT ALPHA"/>
    <property type="match status" value="1"/>
</dbReference>
<dbReference type="PANTHER" id="PTHR10037">
    <property type="entry name" value="VOLTAGE-GATED CATION CHANNEL CALCIUM AND SODIUM"/>
    <property type="match status" value="1"/>
</dbReference>
<dbReference type="Pfam" id="PF00520">
    <property type="entry name" value="Ion_trans"/>
    <property type="match status" value="4"/>
</dbReference>
<dbReference type="Pfam" id="PF24609">
    <property type="entry name" value="IQ_SCN5A_C"/>
    <property type="match status" value="1"/>
</dbReference>
<dbReference type="Pfam" id="PF06512">
    <property type="entry name" value="Na_trans_assoc"/>
    <property type="match status" value="1"/>
</dbReference>
<dbReference type="PRINTS" id="PR00170">
    <property type="entry name" value="NACHANNEL"/>
</dbReference>
<dbReference type="PRINTS" id="PR01665">
    <property type="entry name" value="NACHANNEL4"/>
</dbReference>
<dbReference type="SUPFAM" id="SSF81324">
    <property type="entry name" value="Voltage-gated potassium channels"/>
    <property type="match status" value="4"/>
</dbReference>
<dbReference type="PROSITE" id="PS50096">
    <property type="entry name" value="IQ"/>
    <property type="match status" value="1"/>
</dbReference>
<proteinExistence type="evidence at protein level"/>
<reference key="1">
    <citation type="journal article" date="1992" name="Ann. Neurol.">
        <title>Primary structure of the adult human skeletal muscle voltage-dependent sodium channel.</title>
        <authorList>
            <person name="George A.L. Jr."/>
            <person name="Komisarof J."/>
            <person name="Kallen R.G."/>
            <person name="Barchi R.L."/>
        </authorList>
    </citation>
    <scope>NUCLEOTIDE SEQUENCE [GENOMIC DNA / MRNA]</scope>
    <scope>VARIANTS GLY-524; ASP-559 AND ASP-1376</scope>
    <source>
        <tissue>Skeletal muscle</tissue>
    </source>
</reference>
<reference key="2">
    <citation type="journal article" date="1992" name="Biochem. Biophys. Res. Commun.">
        <title>Sequence and genomic structure of the human adult skeletal muscle sodium channel alpha subunit gene on 17q.</title>
        <authorList>
            <person name="Wang J."/>
            <person name="Rojas C.V."/>
            <person name="Zhou J."/>
            <person name="Schwartz L.S."/>
            <person name="Nicholas H."/>
            <person name="Hoffmann E.P."/>
        </authorList>
    </citation>
    <scope>NUCLEOTIDE SEQUENCE [MRNA]</scope>
</reference>
<reference key="3">
    <citation type="journal article" date="2003" name="Proc. Natl. Acad. Sci. U.S.A.">
        <title>Myasthenic syndrome caused by mutation of the SCN4A sodium channel.</title>
        <authorList>
            <person name="Tsujino A."/>
            <person name="Maertens C."/>
            <person name="Ohno K."/>
            <person name="Shen X.-M."/>
            <person name="Fukuda T."/>
            <person name="Harper C.M."/>
            <person name="Cannon S.C."/>
            <person name="Engel A.G."/>
        </authorList>
    </citation>
    <scope>NUCLEOTIDE SEQUENCE [MRNA]</scope>
    <scope>FUNCTION</scope>
    <scope>TRANSPORTER ACTIVITY</scope>
    <scope>SUBCELLULAR LOCATION</scope>
    <scope>VARIANT CMS16 GLU-1442</scope>
    <scope>VARIANTS LEU-246; GLY-524 AND ASP-559</scope>
    <scope>CHARACTERIZATION OF VARIANT CMS16 GLU-1442</scope>
    <scope>CHARACTERIZATION OF VARIANT LEU-246</scope>
</reference>
<reference key="4">
    <citation type="journal article" date="1992" name="Hum. Mol. Genet.">
        <title>The genomic structure of the human skeletal muscle sodium channel gene.</title>
        <authorList>
            <person name="McClatchey A.I."/>
            <person name="Lin C.S."/>
            <person name="Wang J."/>
            <person name="Hoffman E.P."/>
            <person name="Rojas C.V."/>
            <person name="Gusella J.F."/>
        </authorList>
    </citation>
    <scope>NUCLEOTIDE SEQUENCE [GENOMIC DNA]</scope>
    <scope>VARIANT GLY-524</scope>
</reference>
<reference key="5">
    <citation type="journal article" date="2006" name="Nature">
        <title>DNA sequence of human chromosome 17 and analysis of rearrangement in the human lineage.</title>
        <authorList>
            <person name="Zody M.C."/>
            <person name="Garber M."/>
            <person name="Adams D.J."/>
            <person name="Sharpe T."/>
            <person name="Harrow J."/>
            <person name="Lupski J.R."/>
            <person name="Nicholson C."/>
            <person name="Searle S.M."/>
            <person name="Wilming L."/>
            <person name="Young S.K."/>
            <person name="Abouelleil A."/>
            <person name="Allen N.R."/>
            <person name="Bi W."/>
            <person name="Bloom T."/>
            <person name="Borowsky M.L."/>
            <person name="Bugalter B.E."/>
            <person name="Butler J."/>
            <person name="Chang J.L."/>
            <person name="Chen C.-K."/>
            <person name="Cook A."/>
            <person name="Corum B."/>
            <person name="Cuomo C.A."/>
            <person name="de Jong P.J."/>
            <person name="DeCaprio D."/>
            <person name="Dewar K."/>
            <person name="FitzGerald M."/>
            <person name="Gilbert J."/>
            <person name="Gibson R."/>
            <person name="Gnerre S."/>
            <person name="Goldstein S."/>
            <person name="Grafham D.V."/>
            <person name="Grocock R."/>
            <person name="Hafez N."/>
            <person name="Hagopian D.S."/>
            <person name="Hart E."/>
            <person name="Norman C.H."/>
            <person name="Humphray S."/>
            <person name="Jaffe D.B."/>
            <person name="Jones M."/>
            <person name="Kamal M."/>
            <person name="Khodiyar V.K."/>
            <person name="LaButti K."/>
            <person name="Laird G."/>
            <person name="Lehoczky J."/>
            <person name="Liu X."/>
            <person name="Lokyitsang T."/>
            <person name="Loveland J."/>
            <person name="Lui A."/>
            <person name="Macdonald P."/>
            <person name="Major J.E."/>
            <person name="Matthews L."/>
            <person name="Mauceli E."/>
            <person name="McCarroll S.A."/>
            <person name="Mihalev A.H."/>
            <person name="Mudge J."/>
            <person name="Nguyen C."/>
            <person name="Nicol R."/>
            <person name="O'Leary S.B."/>
            <person name="Osoegawa K."/>
            <person name="Schwartz D.C."/>
            <person name="Shaw-Smith C."/>
            <person name="Stankiewicz P."/>
            <person name="Steward C."/>
            <person name="Swarbreck D."/>
            <person name="Venkataraman V."/>
            <person name="Whittaker C.A."/>
            <person name="Yang X."/>
            <person name="Zimmer A.R."/>
            <person name="Bradley A."/>
            <person name="Hubbard T."/>
            <person name="Birren B.W."/>
            <person name="Rogers J."/>
            <person name="Lander E.S."/>
            <person name="Nusbaum C."/>
        </authorList>
    </citation>
    <scope>NUCLEOTIDE SEQUENCE [LARGE SCALE GENOMIC DNA]</scope>
</reference>
<reference key="6">
    <citation type="journal article" date="1992" name="Cell">
        <title>Temperature-sensitive mutations in the III-IV cytoplasmic loop region of the skeletal muscle sodium channel gene in paramyotonia congenita.</title>
        <authorList>
            <person name="McClatchey A.I."/>
            <person name="van den Bergh P."/>
            <person name="Pericak-Vance M.A."/>
            <person name="Raskind W."/>
            <person name="Verellen C."/>
            <person name="McKenna-Yasek D."/>
            <person name="Rao K."/>
            <person name="Haines J.L."/>
            <person name="Bird T."/>
            <person name="Brown R.H. Jr."/>
            <person name="Gusella J.F."/>
        </authorList>
    </citation>
    <scope>NUCLEOTIDE SEQUENCE [GENOMIC DNA] OF 1305-1339</scope>
    <scope>VARIANTS PMC VAL-1306 AND MET-1313</scope>
</reference>
<reference key="7">
    <citation type="journal article" date="2014" name="Proc. Natl. Acad. Sci. U.S.A.">
        <title>A disulfide tether stabilizes the block of sodium channels by the conotoxin muO[section sign]-GVIIJ.</title>
        <authorList>
            <person name="Gajewiak J."/>
            <person name="Azam L."/>
            <person name="Imperial J."/>
            <person name="Walewska A."/>
            <person name="Green B.R."/>
            <person name="Bandyopadhyay P.K."/>
            <person name="Raghuraman S."/>
            <person name="Ueberheide B."/>
            <person name="Bern M."/>
            <person name="Zhou H.M."/>
            <person name="Minassian N.A."/>
            <person name="Hagan R.H."/>
            <person name="Flinspach M."/>
            <person name="Liu Y."/>
            <person name="Bulaj G."/>
            <person name="Wickenden A.D."/>
            <person name="Olivera B.M."/>
            <person name="Yoshikami D."/>
            <person name="Zhang M.M."/>
        </authorList>
    </citation>
    <scope>TRANSPORTER ACTIVITY</scope>
    <scope>ACTIVITY REGULATION</scope>
</reference>
<reference key="8">
    <citation type="journal article" date="2018" name="Hum. Mutat.">
        <title>A mutation of SCN1B associated with GEFS+ causes functional and maturation defects of the voltage-dependent sodium channel.</title>
        <authorList>
            <person name="Baroni D."/>
            <person name="Picco C."/>
            <person name="Moran O."/>
        </authorList>
    </citation>
    <scope>FUNCTION</scope>
    <scope>ACTIVITY REGULATION</scope>
    <scope>SUBCELLULAR LOCATION</scope>
    <scope>INTERACTION WITH SCN1B</scope>
</reference>
<reference key="9">
    <citation type="journal article" date="2023" name="Nat. Commun.">
        <title>Pain-causing stinging nettle toxins target TMEM233 to modulate NaV1.7 function.</title>
        <authorList>
            <person name="Jami S."/>
            <person name="Deuis J.R."/>
            <person name="Klasfauseweh T."/>
            <person name="Cheng X."/>
            <person name="Kurdyukov S."/>
            <person name="Chung F."/>
            <person name="Okorokov A.L."/>
            <person name="Li S."/>
            <person name="Zhang J."/>
            <person name="Cristofori-Armstrong B."/>
            <person name="Israel M.R."/>
            <person name="Ju R.J."/>
            <person name="Robinson S.D."/>
            <person name="Zhao P."/>
            <person name="Ragnarsson L."/>
            <person name="Andersson A."/>
            <person name="Tran P."/>
            <person name="Schendel V."/>
            <person name="McMahon K.L."/>
            <person name="Tran H.N.T."/>
            <person name="Chin Y.K."/>
            <person name="Zhu Y."/>
            <person name="Liu J."/>
            <person name="Crawford T."/>
            <person name="Purushothamvasan S."/>
            <person name="Habib A.M."/>
            <person name="Andersson D.A."/>
            <person name="Rash L.D."/>
            <person name="Wood J.N."/>
            <person name="Zhao J."/>
            <person name="Stehbens S.J."/>
            <person name="Mobli M."/>
            <person name="Leffler A."/>
            <person name="Jiang D."/>
            <person name="Cox J.J."/>
            <person name="Waxman S.G."/>
            <person name="Dib-Hajj S.D."/>
            <person name="Gregory Neely G."/>
            <person name="Durek T."/>
            <person name="Vetter I."/>
        </authorList>
    </citation>
    <scope>SUBUNIT</scope>
</reference>
<reference evidence="69" key="10">
    <citation type="journal article" date="2018" name="Science">
        <title>Structure of the human voltage-gated sodium channel Nav1.4 in complex with beta1.</title>
        <authorList>
            <person name="Pan X."/>
            <person name="Li Z."/>
            <person name="Zhou Q."/>
            <person name="Shen H."/>
            <person name="Wu K."/>
            <person name="Huang X."/>
            <person name="Chen J."/>
            <person name="Zhang J."/>
            <person name="Zhu X."/>
            <person name="Lei J."/>
            <person name="Xiong W."/>
            <person name="Gong H."/>
            <person name="Xiao B."/>
            <person name="Yan N."/>
        </authorList>
    </citation>
    <scope>STRUCTURE BY ELECTRON MICROSCOPY (3.20 ANGSTROMS) IN COMPLEX WITH SCN1B</scope>
    <scope>FUNCTION</scope>
    <scope>TRANSPORTER ACTIVITY</scope>
    <scope>ACTIVITY REGULATION</scope>
    <scope>TOPOLOGY</scope>
    <scope>SUBCELLULAR LOCATION</scope>
    <scope>SUBUNIT</scope>
    <scope>DOMAIN</scope>
    <scope>GLYCOSYLATION AT ASN-362 AND ASN-1205</scope>
    <scope>DISULFIDE BONDS</scope>
</reference>
<reference key="11">
    <citation type="journal article" date="1991" name="Cell">
        <title>Identification of a mutation in the gene causing hyperkalemic periodic paralysis.</title>
        <authorList>
            <person name="Ptacek L.J."/>
            <person name="George A.L. Jr."/>
            <person name="Griggs R.C."/>
            <person name="Tawil R."/>
            <person name="Kallen R.G."/>
            <person name="Barchi R.L."/>
            <person name="Robertson M."/>
            <person name="Leppert M.F."/>
        </authorList>
    </citation>
    <scope>VARIANT HYPP MET-704</scope>
</reference>
<reference key="12">
    <citation type="journal article" date="1991" name="Nature">
        <title>A Met-to-Val mutation in the skeletal muscle Na+ channel alpha-subunit in hyperkalaemic periodic paralysis.</title>
        <authorList>
            <person name="Rojas C.V."/>
            <person name="Wang J."/>
            <person name="Schwartz L.S."/>
            <person name="Hoffman E.P."/>
            <person name="Powell B.R."/>
            <person name="Brown R.H. Jr."/>
        </authorList>
    </citation>
    <scope>VARIANT HYPP VAL-1592</scope>
</reference>
<reference key="13">
    <citation type="journal article" date="1992" name="Nat. Genet.">
        <title>Novel mutations in families with unusual and variable disorders of the skeletal muscle sodium channel.</title>
        <authorList>
            <person name="McClatchey A.I."/>
            <person name="McKenna-Yasek D."/>
            <person name="Cros D."/>
            <person name="Worthen H.G."/>
            <person name="Kuncl R.W."/>
            <person name="Desilva S.M."/>
            <person name="Cornblath D.R."/>
            <person name="Gusella J.F."/>
            <person name="Brown R.H. Jr."/>
        </authorList>
    </citation>
    <scope>VARIANTS PMC PHE-804 AND THR-1156</scope>
</reference>
<reference key="14">
    <citation type="journal article" date="1992" name="Neuron">
        <title>Mutations in an S4 segment of the adult skeletal muscle sodium channel cause paramyotonia congenita.</title>
        <authorList>
            <person name="Ptacek L.J."/>
            <person name="George A.L. Jr."/>
            <person name="Barchi R.L."/>
            <person name="Griggs R.C."/>
            <person name="Riggs J.E."/>
            <person name="Robertson M."/>
            <person name="Leppert M.F."/>
        </authorList>
    </citation>
    <scope>VARIANTS PMC CYS-1448 AND HIS-1448</scope>
</reference>
<reference key="15">
    <citation type="journal article" date="1993" name="Ann. Neurol.">
        <title>Sodium channel mutations in paramyotonia congenita and hyperkalemic periodic paralysis.</title>
        <authorList>
            <person name="Ptacek L.J."/>
            <person name="Gouw L."/>
            <person name="Kwiecinski H."/>
            <person name="McManis P."/>
            <person name="Mendell J.R."/>
            <person name="Barohn R.J."/>
            <person name="George A.L. Jr."/>
            <person name="Barchi R.L."/>
            <person name="Robertson M."/>
            <person name="Leppert M.F."/>
        </authorList>
    </citation>
    <scope>VARIANT PMC/HYPP ARG-1433</scope>
</reference>
<reference key="16">
    <citation type="journal article" date="1993" name="J. Physiol. (Lond.)">
        <title>Human sodium channel myotonia: slowed channel inactivation due to substitutions for a glycine within the III-IV linker.</title>
        <authorList>
            <person name="Lerche H."/>
            <person name="Heine R."/>
            <person name="Pika U."/>
            <person name="George A.L. Jr."/>
            <person name="Mitrovic N."/>
            <person name="Browatzki M."/>
            <person name="Weiss T."/>
            <person name="Rivet-Bastide M."/>
            <person name="Franke C."/>
            <person name="Lomonaco M."/>
            <person name="Ricker K."/>
            <person name="Lehmann-Horn F."/>
        </authorList>
    </citation>
    <scope>VARIANTS PMC ALA-1306; GLU-1306 AND VAL-1306</scope>
</reference>
<reference key="17">
    <citation type="journal article" date="1993" name="Hum. Mol. Genet.">
        <title>A novel SCN4A mutation causing myotonia aggravated by cold and potassium.</title>
        <authorList>
            <person name="Heine R."/>
            <person name="Pika U."/>
            <person name="Lehmann-Horn F."/>
        </authorList>
    </citation>
    <scope>VARIANT PMC MET-1589</scope>
</reference>
<reference key="18">
    <citation type="journal article" date="1994" name="Neurology">
        <title>Sodium channel mutations in acetazolamide-responsive myotonia congenita, paramyotonia congenita, and hyperkalemic periodic paralysis.</title>
        <authorList>
            <person name="Ptacek L.J."/>
            <person name="Tawil R."/>
            <person name="Griggs R.C."/>
            <person name="Meola G."/>
            <person name="McManis P."/>
            <person name="Barohn R.J."/>
            <person name="Mendell J.R."/>
            <person name="Harris C."/>
            <person name="Spitzer R."/>
            <person name="Santiago F."/>
            <person name="Leppert M.F."/>
        </authorList>
    </citation>
    <scope>VARIANT MYOSCN4A VAL-1160</scope>
</reference>
<reference key="19">
    <citation type="journal article" date="1995" name="Ann. Neurol.">
        <title>Hyperkalemic periodic paralysis with cardiac dysrhythmia: a novel sodium channel mutation?</title>
        <authorList>
            <person name="Baquero J.L."/>
            <person name="Ayala R.A."/>
            <person name="Wang J."/>
            <person name="Curless R.G."/>
            <person name="Feero W.G."/>
            <person name="Hoffman E.P."/>
            <person name="Ebeid M.R."/>
        </authorList>
    </citation>
    <scope>VARIANT ILE-781</scope>
</reference>
<reference key="20">
    <citation type="journal article" date="1995" name="NeuroReport">
        <title>Paramyotonia congenita without paralysis on exposure to cold: a novel mutation in the SCN4A gene (Val1293Ile).</title>
        <authorList>
            <person name="Koch M.C."/>
            <person name="Baumbach K."/>
            <person name="George A.L. Jr."/>
            <person name="Ricker K."/>
        </authorList>
    </citation>
    <scope>VARIANT PMC ILE-1293</scope>
</reference>
<reference key="21">
    <citation type="journal article" date="1997" name="Ann. Neurol.">
        <title>A proposed mutation, Val781Ile, associated with hyperkalemic periodic paralysis and cardiac dysrhythmia is a benign polymorphism.</title>
        <authorList>
            <person name="Green D.S."/>
            <person name="Hayward L.J."/>
            <person name="George A.L. Jr."/>
            <person name="Cannon S.C."/>
        </authorList>
    </citation>
    <scope>VARIANT ILE-781</scope>
</reference>
<reference key="22">
    <citation type="journal article" date="1997" name="Ann. Neurol.">
        <title>A novel muscle sodium channel mutation causes painful congenital myotonia.</title>
        <authorList>
            <person name="Rosenfeld J."/>
            <person name="Sloan-Brown K."/>
            <person name="George A.L. Jr."/>
        </authorList>
    </citation>
    <scope>VARIANT MYOSCN4A MET-445</scope>
</reference>
<reference key="23">
    <citation type="journal article" date="1999" name="Arch. Neurol.">
        <title>A novel mutation in the gene for the adult skeletal muscle sodium channel alpha-subunit (SCN4A) that causes paramyotonia congenita of von Eulenburg.</title>
        <authorList>
            <person name="Sasaki R."/>
            <person name="Takano H."/>
            <person name="Kamakura K."/>
            <person name="Kaida K."/>
            <person name="Hirata A."/>
            <person name="Saito M."/>
            <person name="Tanaka H."/>
            <person name="Kuzuhara S."/>
            <person name="Tsuji S."/>
        </authorList>
    </citation>
    <scope>VARIANT PMC GLU-1456</scope>
</reference>
<reference key="24">
    <citation type="journal article" date="1999" name="FEBS Lett.">
        <title>Functional consequences of a domain 1/S6 segment sodium channel mutation associated with painful congenital myotonia.</title>
        <authorList>
            <person name="Wang D.W."/>
            <person name="VanDeCarr D."/>
            <person name="Ruben P.C."/>
            <person name="George A.L. Jr."/>
            <person name="Bennett P.B."/>
        </authorList>
    </citation>
    <scope>VARIANT MYOSCN4A MET-445</scope>
</reference>
<reference key="25">
    <citation type="journal article" date="1999" name="Neurology">
        <title>A novel sodium channel mutation in a family with hypokalemic periodic paralysis.</title>
        <authorList>
            <person name="Bulman D.E."/>
            <person name="Scoggan K.A."/>
            <person name="van Oene M.D."/>
            <person name="Nicolle M.W."/>
            <person name="Hahn A.F."/>
            <person name="Tollar L.L."/>
            <person name="Ebers G.C."/>
        </authorList>
    </citation>
    <scope>VARIANT HOKPP2 HIS-669</scope>
</reference>
<reference key="26">
    <citation type="journal article" date="2000" name="J. Neurol. Neurosurg. Psych.">
        <title>Clinical, electrophysiological, and molecular genetic studies in a new family with paramyotonia congenita.</title>
        <authorList>
            <person name="Davies N.P."/>
            <person name="Eunson L.H."/>
            <person name="Gregory R.P."/>
            <person name="Mills K.R."/>
            <person name="Morrison P.J."/>
            <person name="Hanna M.G."/>
        </authorList>
    </citation>
    <scope>VARIANT PMC GLU-1456</scope>
</reference>
<reference key="27">
    <citation type="journal article" date="2000" name="Neurology">
        <title>Temperature-sensitive sodium channelopathy with heat-induced myotonia and cold-induced paralysis.</title>
        <authorList>
            <person name="Sugiura Y."/>
            <person name="Aoki T."/>
            <person name="Sugiyama Y."/>
            <person name="Hida C."/>
            <person name="Ogata M."/>
            <person name="Yamamoto T."/>
        </authorList>
    </citation>
    <scope>VARIANT HOKPP2 SER-1158</scope>
</reference>
<reference key="28">
    <citation type="journal article" date="2000" name="Proc. Natl. Acad. Sci. U.S.A.">
        <title>Voltage-sensor sodium channel mutations cause hypokalemic periodic paralysis type 2 by enhanced inactivation and reduced current.</title>
        <authorList>
            <person name="Jurkat-Rott K."/>
            <person name="Mitrovic N."/>
            <person name="Hang C."/>
            <person name="Kouzmekine A."/>
            <person name="Iaizzo P."/>
            <person name="Herzog J."/>
            <person name="Lerche H."/>
            <person name="Nicole S."/>
            <person name="Vale-Santos J."/>
            <person name="Chauveau D."/>
            <person name="Fontaine B."/>
            <person name="Lehmann-Horn F."/>
        </authorList>
    </citation>
    <scope>VARIANTS HOKPP2 GLY-672 AND HIS-672</scope>
</reference>
<reference key="29">
    <citation type="journal article" date="2001" name="Ann. Neurol.">
        <title>Sodium channel inactivation defects are associated with acetazolamide-exacerbated hypokalemic periodic paralysis.</title>
        <authorList>
            <person name="Bendahhou S."/>
            <person name="Cummins T.R."/>
            <person name="Griggs R.C."/>
            <person name="Fu Y.H."/>
            <person name="Ptacek L.J."/>
        </authorList>
    </citation>
    <scope>VARIANT HOKPP2 SER-672</scope>
</reference>
<reference key="30">
    <citation type="journal article" date="2001" name="Neurology">
        <title>Sodium channel gene mutations in hypokalemic periodic paralysis: an uncommon cause in the UK.</title>
        <authorList>
            <person name="Davies N.P."/>
            <person name="Eunson L.H."/>
            <person name="Samuel M."/>
            <person name="Hanna M.G."/>
        </authorList>
    </citation>
    <scope>VARIANT HOKPP2 SER-672</scope>
</reference>
<reference key="31">
    <citation type="journal article" date="2004" name="Muscle Nerve">
        <title>Temperature-sensitive defects in paramyotonia congenita mutants R1448C and T1313M.</title>
        <authorList>
            <person name="Dice M.S."/>
            <person name="Abbruzzese J.L."/>
            <person name="Wheeler J.T."/>
            <person name="Groome J.R."/>
            <person name="Fujimoto E."/>
            <person name="Ruben P.C."/>
        </authorList>
    </citation>
    <scope>VARIANTS PMC MET-1313 AND CYS-1448</scope>
    <scope>CHARACTERIZATION OF VARIANTS PMC MET-1313 AND CYS-1448</scope>
    <scope>FUNCTION</scope>
    <scope>TRANSPORTER ACTIVITY</scope>
    <scope>SUBCELLULAR LOCATION</scope>
</reference>
<reference key="32">
    <citation type="journal article" date="2004" name="Neurology">
        <title>New mutations of SCN4A cause a potassium-sensitive normokalemic periodic paralysis.</title>
        <authorList>
            <person name="Vicart S."/>
            <person name="Sternberg D."/>
            <person name="Fournier E."/>
            <person name="Ochsner F."/>
            <person name="Laforet P."/>
            <person name="Kuntzer T."/>
            <person name="Eymard B."/>
            <person name="Hainque B."/>
            <person name="Fontaine B."/>
        </authorList>
    </citation>
    <scope>VARIANTS NKPP GLY-675; GLN-675 AND TRP-675</scope>
</reference>
<reference key="33">
    <citation type="journal article" date="2005" name="J. Physiol. (Lond.)">
        <title>A1152D mutation of the Na+ channel causes paramyotonia congenita and emphasizes the role of DIII/S4-S5 linker in fast inactivation.</title>
        <authorList>
            <person name="Bouhours M."/>
            <person name="Luce S."/>
            <person name="Sternberg D."/>
            <person name="Willer J.-C."/>
            <person name="Fontaine B."/>
            <person name="Tabti N."/>
        </authorList>
    </citation>
    <scope>VARIANT PMC ASP-1152</scope>
</reference>
<reference key="34">
    <citation type="journal article" date="2006" name="Ann. Neurol.">
        <title>Cold extends electromyography distinction between ion channel mutations causing myotonia.</title>
        <authorList>
            <person name="Fournier E."/>
            <person name="Viala K."/>
            <person name="Gervais H."/>
            <person name="Sternberg D."/>
            <person name="Arzel-Hezode M."/>
            <person name="Laforet P."/>
            <person name="Eymard B."/>
            <person name="Tabti N."/>
            <person name="Willer J.-C."/>
            <person name="Vial C."/>
            <person name="Fontaine B."/>
        </authorList>
    </citation>
    <scope>VARIANT PMC LYS-270</scope>
    <scope>VARIANTS MYOSCN4A THR-715; ASN-804 AND ASN-1310</scope>
</reference>
<reference key="35">
    <citation type="journal article" date="2006" name="Biochem. Biophys. Res. Commun.">
        <title>Gating defects of a novel Na+ channel mutant causing hypokalemic periodic paralysis.</title>
        <authorList>
            <person name="Carle T."/>
            <person name="Lhuillier L."/>
            <person name="Luce S."/>
            <person name="Sternberg D."/>
            <person name="Devuyst O."/>
            <person name="Fontaine B."/>
            <person name="Tabti N."/>
        </authorList>
    </citation>
    <scope>VARIANT HOKPP2 GLN-1132</scope>
    <scope>CHARACTERIZATION OF VARIANT HOKPP2 GLN-1132</scope>
    <scope>FUNCTION</scope>
    <scope>SUBCELLULAR LOCATION</scope>
</reference>
<reference key="36">
    <citation type="journal article" date="2006" name="Neurology">
        <title>Autosomal dominant monosymptomatic myotonia permanens.</title>
        <authorList>
            <person name="Colding-Joergensen E."/>
            <person name="Duno M."/>
            <person name="Vissing J."/>
        </authorList>
    </citation>
    <scope>VARIANT MYOSCN4A GLU-1306</scope>
</reference>
<reference key="37">
    <citation type="journal article" date="2007" name="J. Korean Med. Sci.">
        <title>The genotype and clinical phenotype of Korean patients with familial hypokalemic periodic paralysis.</title>
        <authorList>
            <person name="Kim J.-B."/>
            <person name="Kim M.-H."/>
            <person name="Lee S.J."/>
            <person name="Kim D.-J."/>
            <person name="Lee B.C."/>
        </authorList>
    </citation>
    <scope>VARIANTS HOKPP2 HIS-669; CYS-672 AND GLY-672</scope>
</reference>
<reference key="38">
    <citation type="journal article" date="2007" name="Muscle Nerve">
        <title>A large German kindred with cold-aggravated myotonia and a heterozygous A1481D mutation in the SCN4A gene.</title>
        <authorList>
            <person name="Schoser B.G.H."/>
            <person name="Schroeder J.M."/>
            <person name="Grimm T."/>
            <person name="Sternberg D."/>
            <person name="Kress W."/>
        </authorList>
    </citation>
    <scope>VARIANT MYOSCN4A ASP-1481</scope>
</reference>
<reference key="39">
    <citation type="journal article" date="2007" name="Neurology">
        <title>A novel founder SCN4A mutation causes painful cold-induced myotonia in French-Canadians.</title>
        <authorList>
            <person name="Rossignol E."/>
            <person name="Mathieu J."/>
            <person name="Thiffault I."/>
            <person name="Tetreault M."/>
            <person name="Dicaire M.J."/>
            <person name="Chrestian N."/>
            <person name="Dupre N."/>
            <person name="Puymirat J."/>
            <person name="Brais B."/>
        </authorList>
    </citation>
    <scope>VARIANT MYOSCN4A ILE-1476</scope>
</reference>
<reference key="40">
    <citation type="journal article" date="2008" name="Am. J. Med. Genet. A">
        <title>Severe neonatal non-dystrophic myotonia secondary to a novel mutation of the voltage-gated sodium channel (SCN4A) gene.</title>
        <authorList>
            <person name="Gay S."/>
            <person name="Dupuis D."/>
            <person name="Faivre L."/>
            <person name="Masurel-Paulet A."/>
            <person name="Labenne M."/>
            <person name="Colombani M."/>
            <person name="Soichot P."/>
            <person name="Huet F."/>
            <person name="Hainque B."/>
            <person name="Sternberg D."/>
            <person name="Fontaine B."/>
            <person name="Gouyon J.B."/>
            <person name="Thauvin-Robinet C."/>
        </authorList>
    </citation>
    <scope>VARIANT MYOSCN4A LYS-1297</scope>
</reference>
<reference key="41">
    <citation type="journal article" date="2008" name="Cell. Mol. Neurobiol.">
        <title>Mutations of sodium channel alpha-subunit genes in Chinese patients with normokalemic periodic paralysis.</title>
        <authorList>
            <person name="Xiuhai G."/>
            <person name="Weiping W."/>
            <person name="Ke Z."/>
            <person name="Hongbin W."/>
            <person name="Yiling S."/>
            <person name="Yanling M."/>
        </authorList>
    </citation>
    <scope>VARIANTS NKPP GLN-675 AND VAL-1592</scope>
    <scope>VARIANT ILE-781</scope>
</reference>
<reference key="42">
    <citation type="journal article" date="2008" name="Channels">
        <title>Differential effects of paramyotonia congenita mutations F1473S and F1705I on sodium channel gating.</title>
        <authorList>
            <person name="Groome J.R."/>
            <person name="Larsen M.F."/>
            <person name="Coonts A."/>
        </authorList>
    </citation>
    <scope>CHARACTERIZATION OF VARIANTS PMC SER-1473 AND ILE-1705</scope>
    <scope>FUNCTION</scope>
    <scope>SUBCELLULAR LOCATION</scope>
</reference>
<reference key="43">
    <citation type="journal article" date="2008" name="Neurology">
        <title>What causes paramyotonia in the United Kingdom? Common and new SCN4A mutations revealed.</title>
        <authorList>
            <person name="Matthews E."/>
            <person name="Tan S.V."/>
            <person name="Fialho D."/>
            <person name="Sweeney M.G."/>
            <person name="Sud R."/>
            <person name="Haworth A."/>
            <person name="Stanley E."/>
            <person name="Cea G."/>
            <person name="Davis M.B."/>
            <person name="Hanna M.G."/>
        </authorList>
    </citation>
    <scope>VARIANTS PMC LYS-270; MET-704; ALA-1306; GLU-1306; MET-1313; PRO-1436; CYS-1448; HIS-1448; LEU-1448; GLU-1456; SER-1473 AND MET-1589</scope>
</reference>
<reference key="44">
    <citation type="journal article" date="2008" name="Neurology">
        <title>Cold-induced defects of sodium channel gating in atypical periodic paralysis plus myotonia.</title>
        <authorList>
            <person name="Webb J."/>
            <person name="Cannon S.C."/>
        </authorList>
    </citation>
    <scope>VARIANT HOKPP2 SER-1158</scope>
    <scope>CHARACTERIZATION OF VARIANT HOKPP2 SER-1158</scope>
    <scope>FUNCTION</scope>
    <scope>TRANSPORTER ACTIVITY</scope>
    <scope>SUBCELLULAR LOCATION</scope>
</reference>
<reference key="45">
    <citation type="journal article" date="2008" name="Neurology">
        <title>A novel dominant mutation of the Nav1.4 alpha-subunit domain I leading to sodium channel myotonia.</title>
        <authorList>
            <person name="Petitprez S."/>
            <person name="Tiab L."/>
            <person name="Chen L."/>
            <person name="Kappeler L."/>
            <person name="Rosler K.M."/>
            <person name="Schorderet D."/>
            <person name="Abriel H."/>
            <person name="Burgunder J.M."/>
        </authorList>
    </citation>
    <scope>VARIANT MYOSCN4A VAL-141</scope>
    <scope>CHARACTERIZATION OF VARIANT MYOSCN4A VAL-141</scope>
</reference>
<reference key="46">
    <citation type="journal article" date="2009" name="J. Clin. Neurol.">
        <title>Clinical diversity of SCN4A-mutation-associated skeletal muscle sodium channelopathy.</title>
        <authorList>
            <person name="Lee S.C."/>
            <person name="Kim H.S."/>
            <person name="Park Y.E."/>
            <person name="Choi Y.C."/>
            <person name="Park K.H."/>
            <person name="Kim D.S."/>
        </authorList>
    </citation>
    <scope>VARIANTS MYOSCN4A TRP-225; THR-1156 AND GLU-1306</scope>
    <scope>VARIANT PMC THR-693</scope>
    <scope>VARIANT HYPP THR-1156</scope>
</reference>
<reference key="47">
    <citation type="journal article" date="2009" name="Muscle Nerve">
        <title>New mutation of the Na channel in the severe form of potassium-aggravated myotonia.</title>
        <authorList>
            <person name="Kubota T."/>
            <person name="Kinoshita M."/>
            <person name="Sasaki R."/>
            <person name="Aoike F."/>
            <person name="Takahashi M.P."/>
            <person name="Sakoda S."/>
            <person name="Hirose K."/>
        </authorList>
    </citation>
    <scope>VARIANT MYOSCN4A GLU-1633</scope>
    <scope>CHARACTERIZATION OF VARIANT MYOSCN4A GLU-1633</scope>
    <scope>FUNCTION</scope>
    <scope>SUBCELLULAR LOCATION</scope>
</reference>
<reference key="48">
    <citation type="journal article" date="2009" name="Neuromuscul. Disord.">
        <title>Clinical, electrophysiologic, and genetic study of non-dystrophic myotonia in French-Canadians.</title>
        <authorList>
            <person name="Dupre N."/>
            <person name="Chrestian N."/>
            <person name="Bouchard J.-P."/>
            <person name="Rossignol E."/>
            <person name="Brunet D."/>
            <person name="Sternberg D."/>
            <person name="Brais B."/>
            <person name="Mathieu J."/>
            <person name="Puymirat J."/>
        </authorList>
    </citation>
    <scope>VARIANTS MYOSCN4A MET-445; LYS-452; SER-671; VAL-1306 AND ILE-1476</scope>
</reference>
<reference key="49">
    <citation type="journal article" date="2009" name="Neurology">
        <title>Voltage sensor charge loss accounts for most cases of hypokalemic periodic paralysis.</title>
        <authorList>
            <person name="Matthews E."/>
            <person name="Labrum R."/>
            <person name="Sweeney M.G."/>
            <person name="Sud R."/>
            <person name="Haworth A."/>
            <person name="Chinnery P.F."/>
            <person name="Meola G."/>
            <person name="Schorge S."/>
            <person name="Kullmann D.M."/>
            <person name="Davis M.B."/>
            <person name="Hanna M.G."/>
        </authorList>
    </citation>
    <scope>VARIANTS HOKPP2 TRP-222; CYS-672; GLY-672; HIS-672; SER-672; GLN-1132 AND HIS-1135</scope>
</reference>
<reference key="50">
    <citation type="journal article" date="2009" name="Neuropathology">
        <title>Tubular aggregates in paralysis periodica paramyotonica with T704M mutation of SCN4A.</title>
        <authorList>
            <person name="Luan X."/>
            <person name="Chen B."/>
            <person name="Liu Y."/>
            <person name="Zheng R."/>
            <person name="Zhang W."/>
            <person name="Yuan Y."/>
        </authorList>
    </citation>
    <scope>VARIANT PMC MET-704</scope>
</reference>
<reference key="51">
    <citation type="journal article" date="2010" name="J. Neurol. Neurosurg. Psych.">
        <title>Both hypokalaemic and normokalaemic periodic paralysis in different members of a single family with novel R1129Q mutation in SCN4A gene.</title>
        <authorList>
            <person name="Hong D."/>
            <person name="Luan X."/>
            <person name="Chen B."/>
            <person name="Zheng R."/>
            <person name="Zhang W."/>
            <person name="Wang Z."/>
            <person name="Yuan Y."/>
        </authorList>
    </citation>
    <scope>VARIANT NKPP GLN-1129</scope>
    <scope>VARIANT HOKPP2 GLN-1129</scope>
</reference>
<reference key="52">
    <citation type="journal article" date="2010" name="Turk. J. Pediatr.">
        <title>Hypokalemic periodic paralysis due to the SCN4A R672H mutation in a Turkish family.</title>
        <authorList>
            <person name="Incecik F."/>
            <person name="Herguner M.O."/>
            <person name="Altunbasak S."/>
            <person name="Lehman-Horn F."/>
        </authorList>
    </citation>
    <scope>VARIANT HOKPP2 HIS-672</scope>
</reference>
<reference key="53">
    <citation type="journal article" date="2014" name="Brain">
        <title>NaV1.4 mutations cause hypokalaemic periodic paralysis by disrupting IIIS4 movement during recovery.</title>
        <authorList>
            <person name="Groome J.R."/>
            <person name="Lehmann-Horn F."/>
            <person name="Fan C."/>
            <person name="Wolf M."/>
            <person name="Winston V."/>
            <person name="Merlini L."/>
            <person name="Jurkat-Rott K."/>
        </authorList>
    </citation>
    <scope>VARIANTS HOKPP2 CYS-1135 AND HIS-1135</scope>
    <scope>CHARACTERIZATION OF VARIANTS HOKPP2 CYS-1135 AND HIS-1135</scope>
</reference>
<reference key="54">
    <citation type="journal article" date="2015" name="Ann. Neurol.">
        <title>Defective fast inactivation recovery of Nav 1.4 in congenital myasthenic syndrome.</title>
        <authorList>
            <person name="Arnold W.D."/>
            <person name="Feldman D.H."/>
            <person name="Ramirez S."/>
            <person name="He L."/>
            <person name="Kassar D."/>
            <person name="Quick A."/>
            <person name="Klassen T.L."/>
            <person name="Lara M."/>
            <person name="Nguyen J."/>
            <person name="Kissel J.T."/>
            <person name="Lossin C."/>
            <person name="Maselli R.A."/>
        </authorList>
    </citation>
    <scope>VARIANT CMS16 HIS-1457</scope>
    <scope>CHARACTERIZATION OF VARIANT CMS16 HIS-1457</scope>
    <scope>FUNCTION</scope>
    <scope>SUBCELLULAR LOCATION</scope>
</reference>
<reference key="55">
    <citation type="journal article" date="2015" name="Hum. Mol. Genet.">
        <title>SCN4A pore mutation pathogenetically contributes to autosomal dominant essential tremor and may increase susceptibility to epilepsy.</title>
        <authorList>
            <person name="Bergareche A."/>
            <person name="Bednarz M."/>
            <person name="Sanchez E."/>
            <person name="Krebs C.E."/>
            <person name="Ruiz-Martinez J."/>
            <person name="De La Riva P."/>
            <person name="Makarov V."/>
            <person name="Gorostidi A."/>
            <person name="Jurkat-Rott K."/>
            <person name="Marti-Masso J.F."/>
            <person name="Paisan-Ruiz C."/>
        </authorList>
    </citation>
    <scope>VARIANT SER-1537</scope>
    <scope>CHARACTERIZATION OF VARIANT SER-1537</scope>
</reference>
<reference key="56">
    <citation type="journal article" date="2015" name="Neuromuscul. Disord.">
        <title>SCN4A mutation as modifying factor of myotonic dystrophy type 2 phenotype.</title>
        <authorList>
            <person name="Bugiardini E."/>
            <person name="Rivolta I."/>
            <person name="Binda A."/>
            <person name="Soriano Caminero A."/>
            <person name="Cirillo F."/>
            <person name="Cinti A."/>
            <person name="Giovannoni R."/>
            <person name="Botta A."/>
            <person name="Cardani R."/>
            <person name="Wicklund M.P."/>
            <person name="Meola G."/>
        </authorList>
    </citation>
    <scope>VARIANT LEU-72</scope>
    <scope>CHARACTERIZATION OF VARIANT LEU-72</scope>
    <scope>INVOLVEMENT IN DM2</scope>
</reference>
<reference key="57">
    <citation type="journal article" date="2016" name="Brain">
        <title>Loss-of-function mutations in SCN4A cause severe foetal hypokinesia or 'classical' congenital myopathy.</title>
        <authorList>
            <person name="Zaharieva I.T."/>
            <person name="Thor M.G."/>
            <person name="Oates E.C."/>
            <person name="van Karnebeek C."/>
            <person name="Hendson G."/>
            <person name="Blom E."/>
            <person name="Witting N."/>
            <person name="Rasmussen M."/>
            <person name="Gabbett M.T."/>
            <person name="Ravenscroft G."/>
            <person name="Sframeli M."/>
            <person name="Suetterlin K."/>
            <person name="Sarkozy A."/>
            <person name="D'Argenzio L."/>
            <person name="Hartley L."/>
            <person name="Matthews E."/>
            <person name="Pitt M."/>
            <person name="Vissing J."/>
            <person name="Ballegaard M."/>
            <person name="Krarup C."/>
            <person name="Sloerdahl A."/>
            <person name="Halvorsen H."/>
            <person name="Ye X.C."/>
            <person name="Zhang L.H."/>
            <person name="Loekken N."/>
            <person name="Werlauff U."/>
            <person name="Abdelsayed M."/>
            <person name="Davis M.R."/>
            <person name="Feng L."/>
            <person name="Phadke R."/>
            <person name="Sewry C.A."/>
            <person name="Morgan J.E."/>
            <person name="Laing N.G."/>
            <person name="Vallance H."/>
            <person name="Ruben P."/>
            <person name="Hanna M.G."/>
            <person name="Lewis S."/>
            <person name="Kamsteeg E.J."/>
            <person name="Maennikkoe R."/>
            <person name="Muntoni F."/>
        </authorList>
    </citation>
    <scope>VARIANTS CMYO22A HIS-104; TRP-225; ASN-1069; CYS-1135 AND PHE-1209</scope>
    <scope>VARIANTS CMYO22B LYS-203; THR-382 AND 1593-TYR--VAL-1836 DEL</scope>
    <scope>CHARACTERIZATION OF VARIANTS CMYO22A HIS-104; TRP-225; ASN-1069 AND PHE-1209</scope>
    <scope>CHARACTERIZATION OF VARIANTS CMYO22B LYS-203 AND THR-382</scope>
    <scope>INVOLVEMENT IN CMYO22A</scope>
    <scope>INVOLVEMENT IN CMYO22B</scope>
    <scope>FUNCTION</scope>
    <scope>SUBCELLULAR LOCATION</scope>
</reference>
<reference key="58">
    <citation type="journal article" date="2016" name="J. Neurol. Sci.">
        <title>A case of non-dystrophic myotonia with concomitant mutations in the SCN4A and CLCN1 genes.</title>
        <authorList>
            <person name="Kato H."/>
            <person name="Kokunai Y."/>
            <person name="Dalle C."/>
            <person name="Kubota T."/>
            <person name="Madokoro Y."/>
            <person name="Yuasa H."/>
            <person name="Uchida Y."/>
            <person name="Ikeda T."/>
            <person name="Mochizuki H."/>
            <person name="Nicole S."/>
            <person name="Fontaine B."/>
            <person name="Takahashi M.P."/>
            <person name="Mitake S."/>
        </authorList>
    </citation>
    <scope>VARIANT MYOSCN4A LEU-1290</scope>
</reference>
<reference key="59">
    <citation type="journal article" date="2016" name="Nature">
        <title>Analysis of protein-coding genetic variation in 60,706 humans.</title>
        <authorList>
            <consortium name="Exome Aggregation Consortium"/>
            <person name="Lek M."/>
            <person name="Karczewski K.J."/>
            <person name="Minikel E.V."/>
            <person name="Samocha K.E."/>
            <person name="Banks E."/>
            <person name="Fennell T."/>
            <person name="O'Donnell-Luria A.H."/>
            <person name="Ware J.S."/>
            <person name="Hill A.J."/>
            <person name="Cummings B.B."/>
            <person name="Tukiainen T."/>
            <person name="Birnbaum D.P."/>
            <person name="Kosmicki J.A."/>
            <person name="Duncan L.E."/>
            <person name="Estrada K."/>
            <person name="Zhao F."/>
            <person name="Zou J."/>
            <person name="Pierce-Hoffman E."/>
            <person name="Berghout J."/>
            <person name="Cooper D.N."/>
            <person name="Deflaux N."/>
            <person name="DePristo M."/>
            <person name="Do R."/>
            <person name="Flannick J."/>
            <person name="Fromer M."/>
            <person name="Gauthier L."/>
            <person name="Goldstein J."/>
            <person name="Gupta N."/>
            <person name="Howrigan D."/>
            <person name="Kiezun A."/>
            <person name="Kurki M.I."/>
            <person name="Moonshine A.L."/>
            <person name="Natarajan P."/>
            <person name="Orozco L."/>
            <person name="Peloso G.M."/>
            <person name="Poplin R."/>
            <person name="Rivas M.A."/>
            <person name="Ruano-Rubio V."/>
            <person name="Rose S.A."/>
            <person name="Ruderfer D.M."/>
            <person name="Shakir K."/>
            <person name="Stenson P.D."/>
            <person name="Stevens C."/>
            <person name="Thomas B.P."/>
            <person name="Tiao G."/>
            <person name="Tusie-Luna M.T."/>
            <person name="Weisburd B."/>
            <person name="Won H.H."/>
            <person name="Yu D."/>
            <person name="Altshuler D.M."/>
            <person name="Ardissino D."/>
            <person name="Boehnke M."/>
            <person name="Danesh J."/>
            <person name="Donnelly S."/>
            <person name="Elosua R."/>
            <person name="Florez J.C."/>
            <person name="Gabriel S.B."/>
            <person name="Getz G."/>
            <person name="Glatt S.J."/>
            <person name="Hultman C.M."/>
            <person name="Kathiresan S."/>
            <person name="Laakso M."/>
            <person name="McCarroll S."/>
            <person name="McCarthy M.I."/>
            <person name="McGovern D."/>
            <person name="McPherson R."/>
            <person name="Neale B.M."/>
            <person name="Palotie A."/>
            <person name="Purcell S.M."/>
            <person name="Saleheen D."/>
            <person name="Scharf J.M."/>
            <person name="Sklar P."/>
            <person name="Sullivan P.F."/>
            <person name="Tuomilehto J."/>
            <person name="Tsuang M.T."/>
            <person name="Watkins H.C."/>
            <person name="Wilson J.G."/>
            <person name="Daly M.J."/>
            <person name="MacArthur D.G."/>
        </authorList>
    </citation>
    <scope>VARIANT ILE-781</scope>
</reference>
<reference key="60">
    <citation type="journal article" date="2016" name="Neurology">
        <title>A recessive Nav1.4 mutation underlies congenital myasthenic syndrome with periodic paralysis.</title>
        <authorList>
            <person name="Habbout K."/>
            <person name="Poulin H."/>
            <person name="Rivier F."/>
            <person name="Giuliano S."/>
            <person name="Sternberg D."/>
            <person name="Fontaine B."/>
            <person name="Eymard B."/>
            <person name="Morales R.J."/>
            <person name="Echenne B."/>
            <person name="King L."/>
            <person name="Hanna M.G."/>
            <person name="Maennikkoe R."/>
            <person name="Chahine M."/>
            <person name="Nicole S."/>
            <person name="Bendahhou S."/>
        </authorList>
    </citation>
    <scope>VARIANT CMS16 TRP-1454</scope>
    <scope>CHARACTERIZATION OF VARIANT CMS16 TRP-1454</scope>
    <scope>FUNCTION</scope>
    <scope>TRANSPORTER ACTIVITY</scope>
    <scope>SUBCELLULAR LOCATION</scope>
</reference>
<reference key="61">
    <citation type="journal article" date="2017" name="Neuromuscul. Disord.">
        <title>Congenital myopathy with 'corona' fibres, selective muscle atrophy, and craniosynostosis associated with novel recessive mutations in SCN4A.</title>
        <authorList>
            <person name="Gonorazky H.D."/>
            <person name="Marshall C.R."/>
            <person name="Al-Murshed M."/>
            <person name="Hazrati L.N."/>
            <person name="Thor M.G."/>
            <person name="Hanna M.G."/>
            <person name="Maennikkoe R."/>
            <person name="Ray P.N."/>
            <person name="Yoon G."/>
        </authorList>
    </citation>
    <scope>VARIANTS CMYO22A ARG-375 AND GLN-1142</scope>
    <scope>CHARACTERIZATION OF VARIANTS CMYO22A ARG-375 AND GLN-1142</scope>
</reference>
<reference key="62">
    <citation type="journal article" date="2022" name="Front. Pediatr.">
        <title>Case report: Novel SCN4A variant associated with a severe congenital myasthenic syndrome/myopathy phenotype.</title>
        <authorList>
            <person name="Berghold V.M."/>
            <person name="Koko M."/>
            <person name="Berutti R."/>
            <person name="Plecko B."/>
        </authorList>
    </citation>
    <scope>VARIANTS CMYO22A LYS-1205 AND TRP-1454</scope>
</reference>
<organism>
    <name type="scientific">Homo sapiens</name>
    <name type="common">Human</name>
    <dbReference type="NCBI Taxonomy" id="9606"/>
    <lineage>
        <taxon>Eukaryota</taxon>
        <taxon>Metazoa</taxon>
        <taxon>Chordata</taxon>
        <taxon>Craniata</taxon>
        <taxon>Vertebrata</taxon>
        <taxon>Euteleostomi</taxon>
        <taxon>Mammalia</taxon>
        <taxon>Eutheria</taxon>
        <taxon>Euarchontoglires</taxon>
        <taxon>Primates</taxon>
        <taxon>Haplorrhini</taxon>
        <taxon>Catarrhini</taxon>
        <taxon>Hominidae</taxon>
        <taxon>Homo</taxon>
    </lineage>
</organism>
<keyword id="KW-0002">3D-structure</keyword>
<keyword id="KW-1003">Cell membrane</keyword>
<keyword id="KW-1004">Congenital myasthenic syndrome</keyword>
<keyword id="KW-0225">Disease variant</keyword>
<keyword id="KW-1015">Disulfide bond</keyword>
<keyword id="KW-0325">Glycoprotein</keyword>
<keyword id="KW-0407">Ion channel</keyword>
<keyword id="KW-0406">Ion transport</keyword>
<keyword id="KW-0472">Membrane</keyword>
<keyword id="KW-0597">Phosphoprotein</keyword>
<keyword id="KW-1267">Proteomics identification</keyword>
<keyword id="KW-1185">Reference proteome</keyword>
<keyword id="KW-0677">Repeat</keyword>
<keyword id="KW-0915">Sodium</keyword>
<keyword id="KW-0894">Sodium channel</keyword>
<keyword id="KW-0739">Sodium transport</keyword>
<keyword id="KW-0812">Transmembrane</keyword>
<keyword id="KW-1133">Transmembrane helix</keyword>
<keyword id="KW-0813">Transport</keyword>
<keyword id="KW-0851">Voltage-gated channel</keyword>
<feature type="chain" id="PRO_0000048495" description="Sodium channel protein type 4 subunit alpha">
    <location>
        <begin position="1"/>
        <end position="1836"/>
    </location>
</feature>
<feature type="topological domain" description="Cytoplasmic" evidence="54">
    <location>
        <begin position="1"/>
        <end position="131"/>
    </location>
</feature>
<feature type="transmembrane region" description="Helical; Name=S1 of repeat I" evidence="54">
    <location>
        <begin position="132"/>
        <end position="150"/>
    </location>
</feature>
<feature type="topological domain" description="Extracellular" evidence="54">
    <location>
        <begin position="151"/>
        <end position="157"/>
    </location>
</feature>
<feature type="transmembrane region" description="Helical; Name=S2 of repeat I" evidence="54">
    <location>
        <begin position="158"/>
        <end position="178"/>
    </location>
</feature>
<feature type="topological domain" description="Cytoplasmic" evidence="54">
    <location>
        <begin position="179"/>
        <end position="192"/>
    </location>
</feature>
<feature type="transmembrane region" description="Helical; Name=S3 of repeat I" evidence="54">
    <location>
        <begin position="193"/>
        <end position="210"/>
    </location>
</feature>
<feature type="topological domain" description="Extracellular" evidence="54">
    <location>
        <begin position="211"/>
        <end position="216"/>
    </location>
</feature>
<feature type="transmembrane region" description="Helical; Name=S4 of repeat I" evidence="54">
    <location>
        <begin position="217"/>
        <end position="233"/>
    </location>
</feature>
<feature type="topological domain" description="Cytoplasmic" evidence="54">
    <location>
        <begin position="234"/>
        <end position="252"/>
    </location>
</feature>
<feature type="transmembrane region" description="Helical; Name=S5 of repeat I" evidence="54">
    <location>
        <begin position="253"/>
        <end position="272"/>
    </location>
</feature>
<feature type="topological domain" description="Extracellular" evidence="54">
    <location>
        <begin position="273"/>
        <end position="391"/>
    </location>
</feature>
<feature type="intramembrane region" description="Pore-forming" evidence="54">
    <location>
        <begin position="392"/>
        <end position="416"/>
    </location>
</feature>
<feature type="topological domain" description="Extracellular" evidence="54">
    <location>
        <begin position="417"/>
        <end position="423"/>
    </location>
</feature>
<feature type="transmembrane region" description="Helical; Name=S6 of repeat I" evidence="54">
    <location>
        <begin position="424"/>
        <end position="444"/>
    </location>
</feature>
<feature type="topological domain" description="Cytoplasmic" evidence="54">
    <location>
        <begin position="445"/>
        <end position="578"/>
    </location>
</feature>
<feature type="transmembrane region" description="Helical; Name=S1 of repeat II" evidence="54">
    <location>
        <begin position="579"/>
        <end position="597"/>
    </location>
</feature>
<feature type="topological domain" description="Extracellular" evidence="54">
    <location>
        <begin position="598"/>
        <end position="608"/>
    </location>
</feature>
<feature type="transmembrane region" description="Helical; Name=S2 of repeat II" evidence="54">
    <location>
        <begin position="609"/>
        <end position="628"/>
    </location>
</feature>
<feature type="topological domain" description="Cytoplasmic" evidence="54">
    <location>
        <begin position="629"/>
        <end position="642"/>
    </location>
</feature>
<feature type="transmembrane region" description="Helical; Name=S3 of repeat II" evidence="54">
    <location>
        <begin position="643"/>
        <end position="662"/>
    </location>
</feature>
<feature type="topological domain" description="Extracellular" evidence="54">
    <location>
        <begin position="663"/>
        <end position="664"/>
    </location>
</feature>
<feature type="transmembrane region" description="Helical; Name=S4 of repeat II" evidence="54">
    <location>
        <begin position="665"/>
        <end position="682"/>
    </location>
</feature>
<feature type="topological domain" description="Cytoplasmic" evidence="54">
    <location>
        <begin position="683"/>
        <end position="698"/>
    </location>
</feature>
<feature type="transmembrane region" description="Helical; Name=S5 of repeat II" evidence="54">
    <location>
        <begin position="699"/>
        <end position="717"/>
    </location>
</feature>
<feature type="topological domain" description="Extracellular" evidence="54">
    <location>
        <begin position="718"/>
        <end position="746"/>
    </location>
</feature>
<feature type="intramembrane region" description="Pore-forming" evidence="54">
    <location>
        <begin position="747"/>
        <end position="767"/>
    </location>
</feature>
<feature type="topological domain" description="Extracellular" evidence="54">
    <location>
        <begin position="768"/>
        <end position="778"/>
    </location>
</feature>
<feature type="transmembrane region" description="Helical; Name=S6 of repeat II" evidence="54">
    <location>
        <begin position="779"/>
        <end position="797"/>
    </location>
</feature>
<feature type="topological domain" description="Cytoplasmic" evidence="54">
    <location>
        <begin position="798"/>
        <end position="1032"/>
    </location>
</feature>
<feature type="transmembrane region" description="Helical; Name=S1 of repeat III" evidence="54">
    <location>
        <begin position="1033"/>
        <end position="1050"/>
    </location>
</feature>
<feature type="topological domain" description="Extracellular" evidence="54">
    <location>
        <begin position="1051"/>
        <end position="1063"/>
    </location>
</feature>
<feature type="transmembrane region" description="Helical; Name=S2 of repeat III" evidence="54">
    <location>
        <begin position="1064"/>
        <end position="1082"/>
    </location>
</feature>
<feature type="topological domain" description="Cytoplasmic" evidence="54">
    <location>
        <begin position="1083"/>
        <end position="1096"/>
    </location>
</feature>
<feature type="transmembrane region" description="Helical; Name=S3 of repeat III" evidence="54">
    <location>
        <begin position="1097"/>
        <end position="1115"/>
    </location>
</feature>
<feature type="topological domain" description="Extracellular" evidence="54">
    <location>
        <begin position="1116"/>
        <end position="1123"/>
    </location>
</feature>
<feature type="transmembrane region" description="Helical; Name=S4 of repeat III" evidence="54">
    <location>
        <begin position="1124"/>
        <end position="1142"/>
    </location>
</feature>
<feature type="topological domain" description="Cytoplasmic" evidence="54">
    <location>
        <begin position="1143"/>
        <end position="1159"/>
    </location>
</feature>
<feature type="transmembrane region" description="Helical; Name=S5 of repeat III" evidence="54">
    <location>
        <begin position="1160"/>
        <end position="1179"/>
    </location>
</feature>
<feature type="topological domain" description="Extracellular" evidence="54">
    <location>
        <begin position="1180"/>
        <end position="1230"/>
    </location>
</feature>
<feature type="intramembrane region" description="Pore-forming" evidence="54">
    <location>
        <begin position="1231"/>
        <end position="1252"/>
    </location>
</feature>
<feature type="topological domain" description="Extracellular" evidence="54">
    <location>
        <begin position="1253"/>
        <end position="1269"/>
    </location>
</feature>
<feature type="transmembrane region" description="Helical; Name=S6 of repeat III" evidence="54">
    <location>
        <begin position="1270"/>
        <end position="1291"/>
    </location>
</feature>
<feature type="topological domain" description="Cytoplasmic" evidence="54">
    <location>
        <begin position="1292"/>
        <end position="1354"/>
    </location>
</feature>
<feature type="transmembrane region" description="Helical; Name=S1 of repeat IV" evidence="54">
    <location>
        <begin position="1355"/>
        <end position="1372"/>
    </location>
</feature>
<feature type="topological domain" description="Extracellular" evidence="54">
    <location>
        <begin position="1373"/>
        <end position="1383"/>
    </location>
</feature>
<feature type="transmembrane region" description="Helical; Name=S2 of repeat IV" evidence="54">
    <location>
        <begin position="1384"/>
        <end position="1402"/>
    </location>
</feature>
<feature type="topological domain" description="Cytoplasmic" evidence="54">
    <location>
        <begin position="1403"/>
        <end position="1414"/>
    </location>
</feature>
<feature type="transmembrane region" description="Helical; Name=S3 of repeat IV" evidence="54">
    <location>
        <begin position="1415"/>
        <end position="1432"/>
    </location>
</feature>
<feature type="topological domain" description="Extracellular" evidence="54">
    <location>
        <begin position="1433"/>
        <end position="1445"/>
    </location>
</feature>
<feature type="transmembrane region" description="Helical; Name=S4 of repeat IV" evidence="54">
    <location>
        <begin position="1446"/>
        <end position="1462"/>
    </location>
</feature>
<feature type="topological domain" description="Cytoplasmic" evidence="54">
    <location>
        <begin position="1463"/>
        <end position="1481"/>
    </location>
</feature>
<feature type="transmembrane region" description="Helical; Name=S5 of repeat IV" evidence="54">
    <location>
        <begin position="1482"/>
        <end position="1499"/>
    </location>
</feature>
<feature type="topological domain" description="Extracellular" evidence="54">
    <location>
        <begin position="1500"/>
        <end position="1521"/>
    </location>
</feature>
<feature type="intramembrane region" description="Pore-forming" evidence="54">
    <location>
        <begin position="1522"/>
        <end position="1544"/>
    </location>
</feature>
<feature type="topological domain" description="Extracellular" evidence="54">
    <location>
        <begin position="1545"/>
        <end position="1574"/>
    </location>
</feature>
<feature type="transmembrane region" description="Helical; Name=S6 of repeat IV" evidence="54">
    <location>
        <begin position="1575"/>
        <end position="1597"/>
    </location>
</feature>
<feature type="topological domain" description="Cytoplasmic" evidence="54">
    <location>
        <begin position="1598"/>
        <end position="1836"/>
    </location>
</feature>
<feature type="repeat" description="I" evidence="65">
    <location>
        <begin position="113"/>
        <end position="454"/>
    </location>
</feature>
<feature type="repeat" description="II" evidence="65">
    <location>
        <begin position="560"/>
        <end position="832"/>
    </location>
</feature>
<feature type="repeat" description="III" evidence="65">
    <location>
        <begin position="1013"/>
        <end position="1326"/>
    </location>
</feature>
<feature type="repeat" description="IV" evidence="65">
    <location>
        <begin position="1335"/>
        <end position="1633"/>
    </location>
</feature>
<feature type="domain" description="IQ" evidence="3">
    <location>
        <begin position="1727"/>
        <end position="1756"/>
    </location>
</feature>
<feature type="region of interest" description="Disordered" evidence="4">
    <location>
        <begin position="39"/>
        <end position="63"/>
    </location>
</feature>
<feature type="region of interest" description="Disordered" evidence="4">
    <location>
        <begin position="493"/>
        <end position="530"/>
    </location>
</feature>
<feature type="region of interest" description="Disordered" evidence="4">
    <location>
        <begin position="863"/>
        <end position="885"/>
    </location>
</feature>
<feature type="region of interest" description="Disordered" evidence="4">
    <location>
        <begin position="930"/>
        <end position="992"/>
    </location>
</feature>
<feature type="region of interest" description="Important for rapid channel inactivation" evidence="1">
    <location>
        <begin position="1310"/>
        <end position="1312"/>
    </location>
</feature>
<feature type="region of interest" description="Disordered" evidence="4">
    <location>
        <begin position="1778"/>
        <end position="1836"/>
    </location>
</feature>
<feature type="compositionally biased region" description="Basic and acidic residues" evidence="4">
    <location>
        <begin position="39"/>
        <end position="60"/>
    </location>
</feature>
<feature type="compositionally biased region" description="Polar residues" evidence="4">
    <location>
        <begin position="509"/>
        <end position="528"/>
    </location>
</feature>
<feature type="compositionally biased region" description="Basic and acidic residues" evidence="4">
    <location>
        <begin position="876"/>
        <end position="885"/>
    </location>
</feature>
<feature type="compositionally biased region" description="Acidic residues" evidence="4">
    <location>
        <begin position="930"/>
        <end position="947"/>
    </location>
</feature>
<feature type="compositionally biased region" description="Acidic residues" evidence="4">
    <location>
        <begin position="975"/>
        <end position="992"/>
    </location>
</feature>
<feature type="site" description="Important for inhibition by tetrodotoxin" evidence="1">
    <location>
        <position position="407"/>
    </location>
</feature>
<feature type="glycosylation site" description="N-linked (GlcNAc...) asparagine" evidence="2">
    <location>
        <position position="214"/>
    </location>
</feature>
<feature type="glycosylation site" description="N-linked (GlcNAc...) asparagine" evidence="2">
    <location>
        <position position="288"/>
    </location>
</feature>
<feature type="glycosylation site" description="N-linked (GlcNAc...) asparagine" evidence="2">
    <location>
        <position position="291"/>
    </location>
</feature>
<feature type="glycosylation site" description="N-linked (GlcNAc...) asparagine" evidence="2">
    <location>
        <position position="297"/>
    </location>
</feature>
<feature type="glycosylation site" description="N-linked (GlcNAc...) asparagine" evidence="2">
    <location>
        <position position="303"/>
    </location>
</feature>
<feature type="glycosylation site" description="N-linked (GlcNAc...) asparagine" evidence="2">
    <location>
        <position position="315"/>
    </location>
</feature>
<feature type="glycosylation site" description="N-linked (GlcNAc...) asparagine" evidence="2">
    <location>
        <position position="321"/>
    </location>
</feature>
<feature type="glycosylation site" description="N-linked (GlcNAc...) asparagine" evidence="2">
    <location>
        <position position="333"/>
    </location>
</feature>
<feature type="glycosylation site" description="N-linked (GlcNAc...) asparagine" evidence="54 69">
    <location>
        <position position="362"/>
    </location>
</feature>
<feature type="glycosylation site" description="N-linked (GlcNAc...) asparagine" evidence="2">
    <location>
        <position position="1191"/>
    </location>
</feature>
<feature type="glycosylation site" description="N-linked (GlcNAc...) asparagine" evidence="54 69">
    <location>
        <position position="1205"/>
    </location>
</feature>
<feature type="disulfide bond" evidence="54 69">
    <location>
        <begin position="280"/>
        <end position="360"/>
    </location>
</feature>
<feature type="disulfide bond" evidence="54 69">
    <location>
        <begin position="369"/>
        <end position="375"/>
    </location>
</feature>
<feature type="disulfide bond" evidence="54 69">
    <location>
        <begin position="731"/>
        <end position="737"/>
    </location>
</feature>
<feature type="disulfide bond" evidence="54 69">
    <location>
        <begin position="769"/>
        <end position="778"/>
    </location>
</feature>
<feature type="disulfide bond" evidence="54 69">
    <location>
        <begin position="1189"/>
        <end position="1209"/>
    </location>
</feature>
<feature type="disulfide bond" evidence="54 69">
    <location>
        <begin position="1553"/>
        <end position="1568"/>
    </location>
</feature>
<feature type="sequence variant" id="VAR_074598" description="Found in a patient with severe dystrophia myotonica 2; uncertain significance; the patient carries a disease-causing CCTG repeat expansion in CNBP; may act as a disease modifier; changes the voltage-gated sodium channel activity; increases membrane hyperexcitability; decreases channel fast inactivation; dbSNP:rs1303471186." evidence="45">
    <original>P</original>
    <variation>L</variation>
    <location>
        <position position="72"/>
    </location>
</feature>
<feature type="sequence variant" id="VAR_075430" description="In CMYO22A; likely pathogenic; loss of sodium ion transmembrane transport; dbSNP:rs1248025530." evidence="49">
    <original>R</original>
    <variation>H</variation>
    <location>
        <position position="104"/>
    </location>
</feature>
<feature type="sequence variant" id="VAR_001560">
    <original>M</original>
    <variation>V</variation>
    <location>
        <position position="135"/>
    </location>
</feature>
<feature type="sequence variant" id="VAR_054934" description="In MYOSCN4A; causes a hyperpolarizing shift of the activation curve; enhances channel slow inactivation; dbSNP:rs121908561." evidence="36">
    <original>I</original>
    <variation>V</variation>
    <location>
        <position position="141"/>
    </location>
</feature>
<feature type="sequence variant" id="VAR_075431" description="In CMYO22B; likely pathogenic; impaired sodium ion transmembrane transport; dbSNP:rs933258893." evidence="49">
    <original>M</original>
    <variation>K</variation>
    <location>
        <position position="203"/>
    </location>
</feature>
<feature type="sequence variant" id="VAR_054935" description="In HOKPP2; dbSNP:rs527236148." evidence="38">
    <original>R</original>
    <variation>W</variation>
    <location>
        <position position="222"/>
    </location>
</feature>
<feature type="sequence variant" id="VAR_065230" description="In MYOSCN4A and CMYO22A; impaired sodium ion transmembrane transport; dbSNP:rs764718003." evidence="40 49">
    <original>R</original>
    <variation>W</variation>
    <location>
        <position position="225"/>
    </location>
</feature>
<feature type="sequence variant" id="VAR_017785" description="No significant effect on channel activity; dbSNP:rs80338951." evidence="13">
    <original>S</original>
    <variation>L</variation>
    <location>
        <position position="246"/>
    </location>
</feature>
<feature type="sequence variant" id="VAR_054936" description="In PMC; dbSNP:rs1597985462." evidence="24 32">
    <original>Q</original>
    <variation>K</variation>
    <location>
        <position position="270"/>
    </location>
</feature>
<feature type="sequence variant" id="VAR_088556" description="In CMYO22A; likely pathogenic; loss of sodium ion transmembrane transport." evidence="52">
    <original>C</original>
    <variation>R</variation>
    <location>
        <position position="375"/>
    </location>
</feature>
<feature type="sequence variant" id="VAR_075432" description="In CMYO22B; likely pathogenic; loss of sodium ion transmembrane transport." evidence="49">
    <original>P</original>
    <variation>T</variation>
    <location>
        <position position="382"/>
    </location>
</feature>
<feature type="sequence variant" id="VAR_017786" description="In MYOSCN4A; dbSNP:rs121908552." evidence="5 34 63">
    <original>V</original>
    <variation>M</variation>
    <location>
        <position position="445"/>
    </location>
</feature>
<feature type="sequence variant" id="VAR_054937" description="In MYOSCN4A; variable phenotype ranging from mild to severe myotonia; dbSNP:rs372631097." evidence="34">
    <original>E</original>
    <variation>K</variation>
    <location>
        <position position="452"/>
    </location>
</feature>
<feature type="sequence variant" id="VAR_001561" description="In dbSNP:rs6504191." evidence="13 15 18">
    <original>S</original>
    <variation>G</variation>
    <location>
        <position position="524"/>
    </location>
</feature>
<feature type="sequence variant" id="VAR_017787" description="In dbSNP:rs1047705." evidence="13 15">
    <original>N</original>
    <variation>D</variation>
    <location>
        <position position="559"/>
    </location>
</feature>
<feature type="sequence variant" id="VAR_017788" description="In HOKPP2; dbSNP:rs80338784." evidence="7 31">
    <original>R</original>
    <variation>H</variation>
    <location>
        <position position="669"/>
    </location>
</feature>
<feature type="sequence variant" id="VAR_054938" description="In MYOSCN4A." evidence="34">
    <original>F</original>
    <variation>S</variation>
    <location>
        <position position="671"/>
    </location>
</feature>
<feature type="sequence variant" id="VAR_054939" description="In HOKPP2; dbSNP:rs80338785." evidence="31 38">
    <original>R</original>
    <variation>C</variation>
    <location>
        <position position="672"/>
    </location>
</feature>
<feature type="sequence variant" id="VAR_017789" description="In HOKPP2; dbSNP:rs80338785." evidence="10 31 38">
    <original>R</original>
    <variation>G</variation>
    <location>
        <position position="672"/>
    </location>
</feature>
<feature type="sequence variant" id="VAR_017790" description="In HOKPP2; dbSNP:rs80338788." evidence="10 38 42">
    <original>R</original>
    <variation>H</variation>
    <location>
        <position position="672"/>
    </location>
</feature>
<feature type="sequence variant" id="VAR_017791" description="In HOKPP2; dbSNP:rs80338785." evidence="11 12 38">
    <original>R</original>
    <variation>S</variation>
    <location>
        <position position="672"/>
    </location>
</feature>
<feature type="sequence variant" id="VAR_037104" description="In NKPP; dbSNP:rs121908556." evidence="20">
    <original>R</original>
    <variation>G</variation>
    <location>
        <position position="675"/>
    </location>
</feature>
<feature type="sequence variant" id="VAR_037105" description="In NKPP; dbSNP:rs121908557." evidence="20 30">
    <original>R</original>
    <variation>Q</variation>
    <location>
        <position position="675"/>
    </location>
</feature>
<feature type="sequence variant" id="VAR_037106" description="In NKPP; dbSNP:rs121908556." evidence="20">
    <original>R</original>
    <variation>W</variation>
    <location>
        <position position="675"/>
    </location>
</feature>
<feature type="sequence variant" id="VAR_065231" description="In PMC; dbSNP:rs80338956." evidence="40">
    <original>I</original>
    <variation>T</variation>
    <location>
        <position position="693"/>
    </location>
</feature>
<feature type="sequence variant" id="VAR_001562" description="In HYPP and PMC; dbSNP:rs80338957." evidence="23 32 37">
    <original>T</original>
    <variation>M</variation>
    <location>
        <position position="704"/>
    </location>
</feature>
<feature type="sequence variant" id="VAR_054940" description="In MYOSCN4A; dbSNP:rs749400108." evidence="24">
    <original>A</original>
    <variation>T</variation>
    <location>
        <position position="715"/>
    </location>
</feature>
<feature type="sequence variant" id="VAR_054941" description="Voltage-gated sodium channel activity is not affected and channel activation as well as fast and slow inactivation curves are normal; dbSNP:rs62070884." evidence="30 50 56 62">
    <original>V</original>
    <variation>I</variation>
    <location>
        <position position="781"/>
    </location>
</feature>
<feature type="sequence variant" id="VAR_001563" description="In PMC; dbSNP:rs121908546." evidence="17">
    <original>S</original>
    <variation>F</variation>
    <location>
        <position position="804"/>
    </location>
</feature>
<feature type="sequence variant" id="VAR_054942" description="In MYOSCN4A." evidence="24">
    <original>S</original>
    <variation>N</variation>
    <location>
        <position position="804"/>
    </location>
</feature>
<feature type="sequence variant" id="VAR_001564">
    <original>A</original>
    <variation>D</variation>
    <location>
        <position position="861"/>
    </location>
</feature>
<feature type="sequence variant" id="VAR_075433" description="In CMYO22A; likely pathogenic; impaired sodium ion transmembrane transport; dbSNP:rs373150395." evidence="49">
    <original>D</original>
    <variation>N</variation>
    <location>
        <position position="1069"/>
    </location>
</feature>
<feature type="sequence variant" id="VAR_064987" description="In NKPP and HOKPP2; dbSNP:rs527236149." evidence="41">
    <original>R</original>
    <variation>Q</variation>
    <location>
        <position position="1129"/>
    </location>
</feature>
<feature type="sequence variant" id="VAR_054943" description="In HOKPP2; changes the voltage-gated sodium channel activity; increases membrane hypoexcitability; increases channel activation and both fast and slow channel inactivation; dbSNP:rs80338789." evidence="26 38">
    <original>R</original>
    <variation>Q</variation>
    <location>
        <position position="1132"/>
    </location>
</feature>
<feature type="sequence variant" id="VAR_075434" description="In HOKPP2 and CMYO22A; increased depolarization tendency at normal and reduced extracellular potassium and reduced amplitude and rise time of action potentials; dbSNP:rs1287863349." evidence="44 49">
    <original>R</original>
    <variation>C</variation>
    <location>
        <position position="1135"/>
    </location>
</feature>
<feature type="sequence variant" id="VAR_054944" description="In HOKPP2; increased depolarization tendency at normal and reduced extracellular potassium and reduced amplitude and rise time of action potentials; dbSNP:rs527236150." evidence="38 44">
    <original>R</original>
    <variation>H</variation>
    <location>
        <position position="1135"/>
    </location>
</feature>
<feature type="sequence variant" id="VAR_088557" description="In CMYO22A; likely pathogenic; decreased sodium ion transmembrane transport; dbSNP:rs780703403." evidence="52">
    <original>R</original>
    <variation>Q</variation>
    <location>
        <position position="1142"/>
    </location>
</feature>
<feature type="sequence variant" id="VAR_022341" description="In PMC." evidence="21">
    <original>A</original>
    <variation>D</variation>
    <location>
        <position position="1152"/>
    </location>
</feature>
<feature type="sequence variant" id="VAR_001565" description="In PMC, MYOSCN4A and HYPP; dbSNP:rs80338958." evidence="17 40">
    <original>A</original>
    <variation>T</variation>
    <location>
        <position position="1156"/>
    </location>
</feature>
<feature type="sequence variant" id="VAR_017792" description="In HOKPP2; atypical phenotype with heat-induced myotonia and cold-induced paralysis with hypokalemia; changes the voltage-gated sodium channel activity; increases channel activation and slow inactivation at low temperature; dbSNP:rs121908555." evidence="9 28">
    <original>P</original>
    <variation>S</variation>
    <location>
        <position position="1158"/>
    </location>
</feature>
<feature type="sequence variant" id="VAR_017793" description="In MYOSCN4A; acetazolamide-responsive myotonia; dbSNP:rs121908549." evidence="57">
    <original>I</original>
    <variation>V</variation>
    <location>
        <position position="1160"/>
    </location>
</feature>
<feature type="sequence variant" id="VAR_088558" description="In CMYO22A; uncertain significance; dbSNP:rs1181083611." evidence="55">
    <original>N</original>
    <variation>K</variation>
    <location>
        <position position="1205"/>
    </location>
</feature>
<feature type="sequence variant" id="VAR_075435" description="In CMYO22A; likely pathogenic; loss of sodium ion transmembrane transport." evidence="49">
    <original>C</original>
    <variation>F</variation>
    <location>
        <position position="1209"/>
    </location>
</feature>
<feature type="sequence variant" id="VAR_079519" description="In MYOSCN4A; enhances voltage-gated sodium channel activation inducing membrane hyperexcitability." evidence="51">
    <original>F</original>
    <variation>L</variation>
    <location>
        <position position="1290"/>
    </location>
</feature>
<feature type="sequence variant" id="VAR_001566" description="In PMC; without cold paralysis; dbSNP:rs121908551." evidence="61">
    <original>V</original>
    <variation>I</variation>
    <location>
        <position position="1293"/>
    </location>
</feature>
<feature type="sequence variant" id="VAR_054945" description="In MYOSCN4A; unusually severe and lethal phenotype with neonatal onset; dbSNP:rs121908560." evidence="33">
    <original>N</original>
    <variation>K</variation>
    <location>
        <position position="1297"/>
    </location>
</feature>
<feature type="sequence variant" id="VAR_001567" description="In PMC; dbSNP:rs80338792." evidence="32 59">
    <original>G</original>
    <variation>A</variation>
    <location>
        <position position="1306"/>
    </location>
</feature>
<feature type="sequence variant" id="VAR_001568" description="In MYOSCN4A and PMC; severe; dbSNP:rs80338792." evidence="25 32 40 59">
    <original>G</original>
    <variation>E</variation>
    <location>
        <position position="1306"/>
    </location>
</feature>
<feature type="sequence variant" id="VAR_001569" description="In MYOSCN4A and PMC; dbSNP:rs80338792." evidence="14 34 59">
    <original>G</original>
    <variation>V</variation>
    <location>
        <position position="1306"/>
    </location>
</feature>
<feature type="sequence variant" id="VAR_054946" description="In MYOSCN4A; dbSNP:rs1567817380." evidence="24">
    <original>I</original>
    <variation>N</variation>
    <location>
        <position position="1310"/>
    </location>
</feature>
<feature type="sequence variant" id="VAR_001570" description="In PMC; changes the voltage-gated sodium channel activity; increases membrane hyperexcitability at low temperature; decreases channel activation, deactivation, fast inactivation and recovery delay from fast inactivation; dbSNP:rs121908547." evidence="14 19 32">
    <original>T</original>
    <variation>M</variation>
    <location>
        <position position="1313"/>
    </location>
</feature>
<feature type="sequence variant" id="VAR_017794" description="In dbSNP:rs2058194." evidence="15">
    <original>N</original>
    <variation>D</variation>
    <location>
        <position position="1376"/>
    </location>
</feature>
<feature type="sequence variant" id="VAR_001571" description="In PMC and HYPP; dbSNP:rs121908550." evidence="60">
    <original>L</original>
    <variation>R</variation>
    <location>
        <position position="1433"/>
    </location>
</feature>
<feature type="sequence variant" id="VAR_054947" description="In PMC; dbSNP:rs1598405334." evidence="32">
    <original>L</original>
    <variation>P</variation>
    <location>
        <position position="1436"/>
    </location>
</feature>
<feature type="sequence variant" id="VAR_017795" description="In CMS16; leads to fast inactivation; dbSNP:rs121908553." evidence="13">
    <original>V</original>
    <variation>E</variation>
    <location>
        <position position="1442"/>
    </location>
</feature>
<feature type="sequence variant" id="VAR_001572" description="In PMC; changes the voltage-gated sodium channel activity; increases membrane hyperexcitability at low temperature; decreases channel activation, deactivation, fast inactivation and recovery delay from fast inactivation; dbSNP:rs121908544." evidence="16 19 32">
    <original>R</original>
    <variation>C</variation>
    <location>
        <position position="1448"/>
    </location>
</feature>
<feature type="sequence variant" id="VAR_001573" description="In PMC; dbSNP:rs121908545." evidence="16 32">
    <original>R</original>
    <variation>H</variation>
    <location>
        <position position="1448"/>
    </location>
</feature>
<feature type="sequence variant" id="VAR_054948" description="In PMC; dbSNP:rs121908545." evidence="32">
    <original>R</original>
    <variation>L</variation>
    <location>
        <position position="1448"/>
    </location>
</feature>
<feature type="sequence variant" id="VAR_075436" description="In CMS16 and CMYO22A; leads to hyperpolarization of the steady-state fast inactivation, slow recovery from inactivation and reduces the channel ability to activate in response to repetitive stimulating pulses; dbSNP:rs879253789." evidence="48 55">
    <original>R</original>
    <variation>W</variation>
    <location>
        <position position="1454"/>
    </location>
</feature>
<feature type="sequence variant" id="VAR_037107" description="In PMC; dbSNP:rs121908554." evidence="6 8 32">
    <original>G</original>
    <variation>E</variation>
    <location>
        <position position="1456"/>
    </location>
</feature>
<feature type="sequence variant" id="VAR_075437" description="In CMS16; enhanced fast inactivation and slowed recovery from fast inactivation; dbSNP:rs863225046." evidence="46">
    <original>R</original>
    <variation>H</variation>
    <location>
        <position position="1457"/>
    </location>
</feature>
<feature type="sequence variant" id="VAR_054949" description="In PMC; accelerates deactivation from the inactivated state and enhances the remobilization of gating charge." evidence="32 35">
    <original>F</original>
    <variation>S</variation>
    <location>
        <position position="1473"/>
    </location>
</feature>
<feature type="sequence variant" id="VAR_054950" description="In MYOSCN4A; highly variable severity; dbSNP:rs121908559." evidence="29 34">
    <original>M</original>
    <variation>I</variation>
    <location>
        <position position="1476"/>
    </location>
</feature>
<feature type="sequence variant" id="VAR_054951" description="In MYOSCN4A; fluctuating cold-induced and exercise-induced stiffness; dbSNP:rs763893717." evidence="27">
    <original>A</original>
    <variation>D</variation>
    <location>
        <position position="1481"/>
    </location>
</feature>
<feature type="sequence variant" id="VAR_088559" description="Found in a patient with variable manifestations of essential tremor; uncertain significance; the channel has a tendency toward faster activation and significantly faster inactivation at near-threshold potentials; dbSNP:rs571210585." evidence="47">
    <original>G</original>
    <variation>S</variation>
    <location>
        <position position="1537"/>
    </location>
</feature>
<feature type="sequence variant" id="VAR_001574" description="In PMC; dbSNP:rs121908548." evidence="32 58">
    <original>V</original>
    <variation>M</variation>
    <location>
        <position position="1589"/>
    </location>
</feature>
<feature type="sequence variant" id="VAR_001575" description="In HYPP and NKPP; dbSNP:rs80338962." evidence="22 30">
    <original>M</original>
    <variation>V</variation>
    <location>
        <position position="1592"/>
    </location>
</feature>
<feature type="sequence variant" id="VAR_088560" description="In CMYO22B; likely pathogenic." evidence="49">
    <location>
        <begin position="1593"/>
        <end position="1836"/>
    </location>
</feature>
<feature type="sequence variant" id="VAR_074581" description="In MYOSCN4A; changes the voltage-gated sodium channel activity; increases membrane hyperexcitability; decreases channel fast inactivation; dbSNP:rs2144773878." evidence="39">
    <original>Q</original>
    <variation>E</variation>
    <location>
        <position position="1633"/>
    </location>
</feature>
<feature type="sequence variant" id="VAR_054952" description="In PMC; increases the extent of charge immobilization in response to strong depolarization; dbSNP:rs1064794243." evidence="35">
    <original>F</original>
    <variation>I</variation>
    <location>
        <position position="1705"/>
    </location>
</feature>
<feature type="sequence conflict" description="In Ref. 1; AAA60554." evidence="65" ref="1">
    <original>VP</original>
    <variation>AR</variation>
    <location>
        <begin position="10"/>
        <end position="11"/>
    </location>
</feature>
<feature type="sequence conflict" description="In Ref. 1; AAA60554." evidence="65" ref="1">
    <original>E</original>
    <variation>K</variation>
    <location>
        <position position="371"/>
    </location>
</feature>
<feature type="sequence conflict" description="In Ref. 1; AAB59624." evidence="65" ref="1">
    <original>E</original>
    <variation>Q</variation>
    <location>
        <position position="371"/>
    </location>
</feature>
<feature type="sequence conflict" description="In Ref. 1; AAB59624." evidence="65" ref="1">
    <original>A</original>
    <variation>G</variation>
    <location>
        <position position="870"/>
    </location>
</feature>
<feature type="sequence conflict" description="In Ref. 1; AAB59624." evidence="65" ref="1">
    <original>NA</original>
    <variation>KP</variation>
    <location>
        <begin position="1151"/>
        <end position="1152"/>
    </location>
</feature>
<feature type="helix" evidence="70">
    <location>
        <begin position="121"/>
        <end position="128"/>
    </location>
</feature>
<feature type="helix" evidence="70">
    <location>
        <begin position="133"/>
        <end position="147"/>
    </location>
</feature>
<feature type="helix" evidence="70">
    <location>
        <begin position="158"/>
        <end position="179"/>
    </location>
</feature>
<feature type="helix" evidence="70">
    <location>
        <begin position="184"/>
        <end position="188"/>
    </location>
</feature>
<feature type="helix" evidence="70">
    <location>
        <begin position="194"/>
        <end position="209"/>
    </location>
</feature>
<feature type="helix" evidence="70">
    <location>
        <begin position="219"/>
        <end position="227"/>
    </location>
</feature>
<feature type="helix" evidence="70">
    <location>
        <begin position="228"/>
        <end position="232"/>
    </location>
</feature>
<feature type="helix" evidence="70">
    <location>
        <begin position="236"/>
        <end position="243"/>
    </location>
</feature>
<feature type="helix" evidence="70">
    <location>
        <begin position="245"/>
        <end position="248"/>
    </location>
</feature>
<feature type="helix" evidence="70">
    <location>
        <begin position="251"/>
        <end position="272"/>
    </location>
</feature>
<feature type="helix" evidence="70">
    <location>
        <begin position="275"/>
        <end position="277"/>
    </location>
</feature>
<feature type="strand" evidence="70">
    <location>
        <begin position="279"/>
        <end position="282"/>
    </location>
</feature>
<feature type="helix" evidence="70">
    <location>
        <begin position="338"/>
        <end position="342"/>
    </location>
</feature>
<feature type="strand" evidence="70">
    <location>
        <begin position="362"/>
        <end position="366"/>
    </location>
</feature>
<feature type="strand" evidence="70">
    <location>
        <begin position="373"/>
        <end position="377"/>
    </location>
</feature>
<feature type="strand" evidence="70">
    <location>
        <begin position="389"/>
        <end position="391"/>
    </location>
</feature>
<feature type="helix" evidence="70">
    <location>
        <begin position="392"/>
        <end position="397"/>
    </location>
</feature>
<feature type="helix" evidence="70">
    <location>
        <begin position="400"/>
        <end position="403"/>
    </location>
</feature>
<feature type="helix" evidence="70">
    <location>
        <begin position="408"/>
        <end position="419"/>
    </location>
</feature>
<feature type="helix" evidence="70">
    <location>
        <begin position="421"/>
        <end position="423"/>
    </location>
</feature>
<feature type="helix" evidence="70">
    <location>
        <begin position="424"/>
        <end position="433"/>
    </location>
</feature>
<feature type="turn" evidence="70">
    <location>
        <begin position="434"/>
        <end position="438"/>
    </location>
</feature>
<feature type="helix" evidence="70">
    <location>
        <begin position="439"/>
        <end position="453"/>
    </location>
</feature>
<feature type="helix" evidence="70">
    <location>
        <begin position="455"/>
        <end position="462"/>
    </location>
</feature>
<feature type="helix" evidence="70">
    <location>
        <begin position="561"/>
        <end position="576"/>
    </location>
</feature>
<feature type="strand" evidence="70">
    <location>
        <begin position="577"/>
        <end position="580"/>
    </location>
</feature>
<feature type="helix" evidence="70">
    <location>
        <begin position="581"/>
        <end position="595"/>
    </location>
</feature>
<feature type="helix" evidence="70">
    <location>
        <begin position="604"/>
        <end position="631"/>
    </location>
</feature>
<feature type="turn" evidence="70">
    <location>
        <begin position="634"/>
        <end position="639"/>
    </location>
</feature>
<feature type="helix" evidence="70">
    <location>
        <begin position="641"/>
        <end position="659"/>
    </location>
</feature>
<feature type="helix" evidence="70">
    <location>
        <begin position="668"/>
        <end position="670"/>
    </location>
</feature>
<feature type="helix" evidence="70">
    <location>
        <begin position="672"/>
        <end position="680"/>
    </location>
</feature>
<feature type="helix" evidence="70">
    <location>
        <begin position="686"/>
        <end position="697"/>
    </location>
</feature>
<feature type="turn" evidence="70">
    <location>
        <begin position="698"/>
        <end position="702"/>
    </location>
</feature>
<feature type="helix" evidence="70">
    <location>
        <begin position="703"/>
        <end position="726"/>
    </location>
</feature>
<feature type="helix" evidence="70">
    <location>
        <begin position="730"/>
        <end position="732"/>
    </location>
</feature>
<feature type="strand" evidence="70">
    <location>
        <begin position="744"/>
        <end position="746"/>
    </location>
</feature>
<feature type="helix" evidence="70">
    <location>
        <begin position="747"/>
        <end position="759"/>
    </location>
</feature>
<feature type="helix" evidence="70">
    <location>
        <begin position="764"/>
        <end position="772"/>
    </location>
</feature>
<feature type="helix" evidence="70">
    <location>
        <begin position="775"/>
        <end position="802"/>
    </location>
</feature>
<feature type="helix" evidence="70">
    <location>
        <begin position="1015"/>
        <end position="1028"/>
    </location>
</feature>
<feature type="helix" evidence="70">
    <location>
        <begin position="1031"/>
        <end position="1046"/>
    </location>
</feature>
<feature type="helix" evidence="70">
    <location>
        <begin position="1053"/>
        <end position="1055"/>
    </location>
</feature>
<feature type="helix" evidence="70">
    <location>
        <begin position="1060"/>
        <end position="1078"/>
    </location>
</feature>
<feature type="helix" evidence="70">
    <location>
        <begin position="1081"/>
        <end position="1087"/>
    </location>
</feature>
<feature type="helix" evidence="70">
    <location>
        <begin position="1090"/>
        <end position="1093"/>
    </location>
</feature>
<feature type="strand" evidence="70">
    <location>
        <begin position="1095"/>
        <end position="1097"/>
    </location>
</feature>
<feature type="helix" evidence="70">
    <location>
        <begin position="1098"/>
        <end position="1116"/>
    </location>
</feature>
<feature type="strand" evidence="70">
    <location>
        <begin position="1117"/>
        <end position="1119"/>
    </location>
</feature>
<feature type="turn" evidence="70">
    <location>
        <begin position="1123"/>
        <end position="1129"/>
    </location>
</feature>
<feature type="helix" evidence="70">
    <location>
        <begin position="1130"/>
        <end position="1141"/>
    </location>
</feature>
<feature type="helix" evidence="70">
    <location>
        <begin position="1144"/>
        <end position="1153"/>
    </location>
</feature>
<feature type="strand" evidence="70">
    <location>
        <begin position="1154"/>
        <end position="1156"/>
    </location>
</feature>
<feature type="helix" evidence="70">
    <location>
        <begin position="1157"/>
        <end position="1182"/>
    </location>
</feature>
<feature type="strand" evidence="70">
    <location>
        <begin position="1188"/>
        <end position="1191"/>
    </location>
</feature>
<feature type="turn" evidence="70">
    <location>
        <begin position="1192"/>
        <end position="1194"/>
    </location>
</feature>
<feature type="turn" evidence="70">
    <location>
        <begin position="1200"/>
        <end position="1202"/>
    </location>
</feature>
<feature type="helix" evidence="70">
    <location>
        <begin position="1206"/>
        <end position="1209"/>
    </location>
</feature>
<feature type="helix" evidence="70">
    <location>
        <begin position="1210"/>
        <end position="1212"/>
    </location>
</feature>
<feature type="strand" evidence="70">
    <location>
        <begin position="1218"/>
        <end position="1221"/>
    </location>
</feature>
<feature type="helix" evidence="70">
    <location>
        <begin position="1230"/>
        <end position="1241"/>
    </location>
</feature>
<feature type="helix" evidence="70">
    <location>
        <begin position="1246"/>
        <end position="1255"/>
    </location>
</feature>
<feature type="helix" evidence="70">
    <location>
        <begin position="1269"/>
        <end position="1271"/>
    </location>
</feature>
<feature type="helix" evidence="70">
    <location>
        <begin position="1272"/>
        <end position="1281"/>
    </location>
</feature>
<feature type="helix" evidence="70">
    <location>
        <begin position="1284"/>
        <end position="1304"/>
    </location>
</feature>
<feature type="strand" evidence="70">
    <location>
        <begin position="1305"/>
        <end position="1309"/>
    </location>
</feature>
<feature type="helix" evidence="70">
    <location>
        <begin position="1316"/>
        <end position="1324"/>
    </location>
</feature>
<feature type="turn" evidence="70">
    <location>
        <begin position="1325"/>
        <end position="1328"/>
    </location>
</feature>
<feature type="strand" evidence="70">
    <location>
        <begin position="1341"/>
        <end position="1343"/>
    </location>
</feature>
<feature type="helix" evidence="70">
    <location>
        <begin position="1347"/>
        <end position="1350"/>
    </location>
</feature>
<feature type="helix" evidence="70">
    <location>
        <begin position="1354"/>
        <end position="1362"/>
    </location>
</feature>
<feature type="helix" evidence="70">
    <location>
        <begin position="1365"/>
        <end position="1371"/>
    </location>
</feature>
<feature type="helix" evidence="70">
    <location>
        <begin position="1379"/>
        <end position="1404"/>
    </location>
</feature>
<feature type="turn" evidence="70">
    <location>
        <begin position="1408"/>
        <end position="1413"/>
    </location>
</feature>
<feature type="helix" evidence="70">
    <location>
        <begin position="1415"/>
        <end position="1439"/>
    </location>
</feature>
<feature type="strand" evidence="70">
    <location>
        <begin position="1444"/>
        <end position="1446"/>
    </location>
</feature>
<feature type="helix" evidence="70">
    <location>
        <begin position="1447"/>
        <end position="1450"/>
    </location>
</feature>
<feature type="helix" evidence="70">
    <location>
        <begin position="1451"/>
        <end position="1463"/>
    </location>
</feature>
<feature type="helix" evidence="70">
    <location>
        <begin position="1468"/>
        <end position="1503"/>
    </location>
</feature>
<feature type="strand" evidence="70">
    <location>
        <begin position="1504"/>
        <end position="1506"/>
    </location>
</feature>
<feature type="strand" evidence="70">
    <location>
        <begin position="1515"/>
        <end position="1521"/>
    </location>
</feature>
<feature type="helix" evidence="70">
    <location>
        <begin position="1522"/>
        <end position="1531"/>
    </location>
</feature>
<feature type="helix" evidence="70">
    <location>
        <begin position="1532"/>
        <end position="1534"/>
    </location>
</feature>
<feature type="helix" evidence="70">
    <location>
        <begin position="1538"/>
        <end position="1542"/>
    </location>
</feature>
<feature type="turn" evidence="70">
    <location>
        <begin position="1543"/>
        <end position="1545"/>
    </location>
</feature>
<feature type="strand" evidence="70">
    <location>
        <begin position="1549"/>
        <end position="1553"/>
    </location>
</feature>
<feature type="helix" evidence="70">
    <location>
        <begin position="1571"/>
        <end position="1605"/>
    </location>
</feature>
<feature type="helix" evidence="71">
    <location>
        <begin position="1614"/>
        <end position="1627"/>
    </location>
</feature>
<feature type="strand" evidence="71">
    <location>
        <begin position="1633"/>
        <end position="1636"/>
    </location>
</feature>
<feature type="helix" evidence="71">
    <location>
        <begin position="1637"/>
        <end position="1639"/>
    </location>
</feature>
<feature type="helix" evidence="71">
    <location>
        <begin position="1640"/>
        <end position="1646"/>
    </location>
</feature>
<feature type="turn" evidence="71">
    <location>
        <begin position="1649"/>
        <end position="1651"/>
    </location>
</feature>
<feature type="helix" evidence="71">
    <location>
        <begin position="1658"/>
        <end position="1663"/>
    </location>
</feature>
<feature type="strand" evidence="71">
    <location>
        <begin position="1667"/>
        <end position="1669"/>
    </location>
</feature>
<feature type="turn" evidence="71">
    <location>
        <begin position="1670"/>
        <end position="1672"/>
    </location>
</feature>
<feature type="strand" evidence="71">
    <location>
        <begin position="1673"/>
        <end position="1675"/>
    </location>
</feature>
<feature type="helix" evidence="71">
    <location>
        <begin position="1676"/>
        <end position="1688"/>
    </location>
</feature>
<feature type="helix" evidence="71">
    <location>
        <begin position="1692"/>
        <end position="1705"/>
    </location>
</feature>
<feature type="strand" evidence="71">
    <location>
        <begin position="1718"/>
        <end position="1720"/>
    </location>
</feature>
<feature type="helix" evidence="71">
    <location>
        <begin position="1721"/>
        <end position="1745"/>
    </location>
</feature>
<comment type="function">
    <text evidence="13 19 26 28 35 39 46 48 49 53 54">Pore-forming subunit of Nav1.4, a voltage-gated sodium (Nav) channel that directly mediates the depolarizing phase of action potentials in excitable membranes. Navs, also called VGSCs (voltage-gated sodium channels) or VDSCs (voltage-dependent sodium channels), operate by switching between closed and open conformations depending on the voltage difference across the membrane. In the open conformation they allow Na(+) ions to selectively pass through the pore, along their electrochemical gradient. The influx of Na+ ions provokes membrane depolarization, initiating the propagation of electrical signals throughout cells and tissues (PubMed:12766226, PubMed:15318338, PubMed:16890191, PubMed:17898326, PubMed:18690054, PubMed:19347921, PubMed:25707578, PubMed:26659129, PubMed:26700687, PubMed:29992740, PubMed:30190309). Highly expressed in skeletal muscles, Nav1.4 generates the action potential crucial for muscle contraction (PubMed:16890191, PubMed:19347921, PubMed:25707578, PubMed:26659129, PubMed:26700687).</text>
</comment>
<comment type="catalytic activity">
    <reaction evidence="13 19 28 43 48 54">
        <text>Na(+)(in) = Na(+)(out)</text>
        <dbReference type="Rhea" id="RHEA:34963"/>
        <dbReference type="ChEBI" id="CHEBI:29101"/>
    </reaction>
</comment>
<comment type="activity regulation">
    <text evidence="43 54">The channel is inhibited by tetrodotoxin and saxitoxin (PubMed:30190309). Inhibited by the conotoxin GVIIJ (PubMed:24497506).</text>
</comment>
<comment type="subunit">
    <text evidence="1 43 53 54">The Nav1.4 voltage-gated sodium channel consists of an ion-conducting alpha subunit SCN4A which is functional on its own and a regulatory beta subunit SCN1B (PubMed:29992740, PubMed:30190309). SCN1B strongly enhances the presence of SCN4A at the cell surface (PubMed:29992740). SCN1B is also required for rapid channel inactivation and recovery after inactivation. It prevents the decrease of channel activity in response to repetitive, high-frequency depolarizations (By similarity). Interacts with the syntrophins SNTA1, SNTB1 and SNTB2 (via PDZ domain); probably links SCN4A to the actin cytoskeleton and the extracellular matrix via the dystrophin-associated protein complex and regulates its localization in muscle cells (By similarity). Interacts with TMEM233; probable regulator of the channel (By similarity) (PubMed:24497506, PubMed:29992740, PubMed:30190309, PubMed:37117223).</text>
</comment>
<comment type="interaction">
    <interactant intactId="EBI-16813249">
        <id>P35499</id>
    </interactant>
    <interactant intactId="EBI-20974499">
        <id>Q07699-1</id>
        <label>SCN1B</label>
    </interactant>
    <organismsDiffer>false</organismsDiffer>
    <experiments>2</experiments>
</comment>
<comment type="subcellular location">
    <subcellularLocation>
        <location evidence="13 19 26 28 35 39 46 48 49 53 54">Cell membrane</location>
        <topology evidence="54">Multi-pass membrane protein</topology>
    </subcellularLocation>
</comment>
<comment type="domain">
    <text evidence="67">The sequence contains 4 internal repeats, each with 5 hydrophobic segments (S1, S2, S3, S5, S6) and one positively charged segment (S4). Segments S4 are probably the voltage-sensors and are characterized by a series of positively charged amino acids at every third position.</text>
</comment>
<comment type="disease" evidence="6 8 14 16 17 19 21 24 32 35 37 40 58 59 60 61">
    <disease id="DI-00901">
        <name>Paramyotonia congenita</name>
        <acronym>PMC</acronym>
        <description>An autosomal dominant channelopathy characterized by myotonia, increased by exposure to cold, intermittent flaccid paresis, not necessarily dependent on cold or myotonia, lability of serum potassium, non-progressive nature and lack of atrophy or hypertrophy of muscles. In some patients, myotonia is not increased by cold exposure (paramyotonia without cold paralysis). Patients may have a combination phenotype of PMC and HYPP.</description>
        <dbReference type="MIM" id="168300"/>
    </disease>
    <text>The disease is caused by variants affecting the gene represented in this entry.</text>
</comment>
<comment type="disease" evidence="7 9 10 11 12 26 28 31 38 41 42 44">
    <disease id="DI-02768">
        <name>Periodic paralysis hypokalemic 2</name>
        <acronym>HOKPP2</acronym>
        <description>An autosomal dominant disorder manifested by episodic flaccid generalized muscle weakness associated with falls of serum potassium levels.</description>
        <dbReference type="MIM" id="613345"/>
    </disease>
    <text>The disease is caused by variants affecting the gene represented in this entry.</text>
</comment>
<comment type="disease" evidence="22 23 40">
    <disease id="DI-00906">
        <name>Periodic paralysis hyperkalemic</name>
        <acronym>HYPP</acronym>
        <description>An autosomal dominant channelopathy characterized by episodic flaccid generalized muscle weakness associated with high levels of serum potassium. Concurrence of myotonia is found in HYPP patients.</description>
        <dbReference type="MIM" id="170500"/>
    </disease>
    <text>The disease is caused by variants affecting the gene represented in this entry.</text>
</comment>
<comment type="disease" evidence="20 30 41">
    <disease id="DI-00908">
        <name>Periodic paralysis normokalemic</name>
        <acronym>NKPP</acronym>
        <description>A disorder closely related to hyperkalemic periodic paralysis, but marked by a lack of alterations in potassium levels during attacks of muscle weakness.</description>
        <dbReference type="MIM" id="170500"/>
    </disease>
    <text>The disease is caused by variants affecting the gene represented in this entry.</text>
</comment>
<comment type="disease" evidence="5 24 25 27 29 33 34 36 39 40 51 57 63">
    <disease id="DI-00796">
        <name>Myotonia SCN4A-related</name>
        <acronym>MYOSCN4A</acronym>
        <description>A phenotypically highly variable myotonia aggravated by potassium loading, and sometimes by cold. Myotonia is characterized by sustained muscle tensing that prevents muscles from relaxing normally. It causes muscle stiffness that can interfere with movement. In some people the stiffness is very mild, while in other cases it may be severe enough to interfere with walking, running, and other activities of daily life. Myotonia SCN4A-related includes myotonia permanens and myotonia fluctuans. In myotonia permanens, the myotonia is generalized and there is a hypertrophy of the muscle, particularly in the neck and the shoulder. Attacks of severe muscle stiffness of the thoracic muscles may be life threatening due to impaired ventilation. In myotonia fluctuans, the muscle stiffness may fluctuate from day to day, provoked by exercise.</description>
        <dbReference type="MIM" id="608390"/>
    </disease>
    <text>The disease is caused by variants affecting the gene represented in this entry.</text>
</comment>
<comment type="disease" evidence="13 46 48">
    <disease id="DI-00365">
        <name>Myasthenic syndrome, congenital, 16</name>
        <acronym>CMS16</acronym>
        <description>A form of congenital myasthenic syndrome, a group of disorders characterized by failure of neuromuscular transmission, including pre-synaptic, synaptic, and post-synaptic disorders that are not of autoimmune origin. Clinical features are easy fatigability and muscle weakness. CMS16 is characterized by fatigable generalized weakness and recurrent attacks of respiratory and bulbar paralysis since birth. The fatigable weakness involves lid-elevator, external ocular, facial, limb and truncal muscles and an decremental response of the compound muscle action potential on repetitive stimulation.</description>
        <dbReference type="MIM" id="614198"/>
    </disease>
    <text>The disease is caused by variants affecting the gene represented in this entry.</text>
</comment>
<comment type="disease" evidence="49 52 55">
    <disease id="DI-06672">
        <name>Congenital myopathy 22A, classic</name>
        <acronym>CMYO22A</acronym>
        <description>A form of congenital myopathy, a clinically and genetically heterogeneous group of muscle disorders characterized by hypotonia and muscle weakness apparent at birth, and specific pathological features on muscle biopsy. CMYO22A is an autosomal recessive form characterized by fetal hypokinesia, polyhydramnios, and severe neonatal hypotonia associated with respiratory insufficiency. Affected individuals who survive the neonatal period have delayed motor development, difficulty walking, proximal muscle weakness of the upper and lower limbs, facial and neck muscle weakness, easy fatigability, and mild limb contractures or foot deformities.</description>
        <dbReference type="MIM" id="620351"/>
    </disease>
    <text>The disease is caused by variants affecting the gene represented in this entry.</text>
</comment>
<comment type="disease" evidence="49">
    <disease id="DI-06673">
        <name>Congenital myopathy 22B, severe fetal</name>
        <acronym>CMYO22B</acronym>
        <description>A severe congenital myopathy, a clinically and genetically heterogeneous group of muscle disorders characterized by hypotonia and muscle weakness apparent at birth, and specific pathological features on muscle biopsy. CMYO22B is an autosomal recessive form characterized by onset in utero. Affected individuals show fetal akinesia, and develop fetal hydrops with pulmonary hypoplasia, severe joint contractures, and generalized muscle hypoplasia. Death occurs in utero or soon after birth.</description>
        <dbReference type="MIM" id="620369"/>
    </disease>
    <text>The disease is caused by variants affecting the gene represented in this entry.</text>
</comment>
<comment type="similarity">
    <text evidence="65">Belongs to the sodium channel (TC 1.A.1.10) family. Nav1.4/SCN4A subfamily.</text>
</comment>
<comment type="online information" name="Wikipedia">
    <link uri="https://en.wikipedia.org/wiki/SCN4A"/>
    <text>SCN4A entry</text>
</comment>